<proteinExistence type="evidence at protein level"/>
<evidence type="ECO:0000250" key="1">
    <source>
        <dbReference type="UniProtKB" id="P11345"/>
    </source>
</evidence>
<evidence type="ECO:0000250" key="2">
    <source>
        <dbReference type="UniProtKB" id="Q99N57"/>
    </source>
</evidence>
<evidence type="ECO:0000255" key="3">
    <source>
        <dbReference type="PROSITE-ProRule" id="PRU00159"/>
    </source>
</evidence>
<evidence type="ECO:0000255" key="4">
    <source>
        <dbReference type="PROSITE-ProRule" id="PRU00226"/>
    </source>
</evidence>
<evidence type="ECO:0000255" key="5">
    <source>
        <dbReference type="PROSITE-ProRule" id="PRU00262"/>
    </source>
</evidence>
<evidence type="ECO:0000256" key="6">
    <source>
        <dbReference type="SAM" id="MobiDB-lite"/>
    </source>
</evidence>
<evidence type="ECO:0000269" key="7">
    <source>
    </source>
</evidence>
<evidence type="ECO:0000269" key="8">
    <source>
    </source>
</evidence>
<evidence type="ECO:0000269" key="9">
    <source>
    </source>
</evidence>
<evidence type="ECO:0000269" key="10">
    <source>
    </source>
</evidence>
<evidence type="ECO:0000269" key="11">
    <source>
    </source>
</evidence>
<evidence type="ECO:0000269" key="12">
    <source>
    </source>
</evidence>
<evidence type="ECO:0000269" key="13">
    <source>
    </source>
</evidence>
<evidence type="ECO:0000269" key="14">
    <source>
    </source>
</evidence>
<evidence type="ECO:0000269" key="15">
    <source>
    </source>
</evidence>
<evidence type="ECO:0000269" key="16">
    <source>
    </source>
</evidence>
<evidence type="ECO:0000269" key="17">
    <source>
    </source>
</evidence>
<evidence type="ECO:0000269" key="18">
    <source>
    </source>
</evidence>
<evidence type="ECO:0000269" key="19">
    <source>
    </source>
</evidence>
<evidence type="ECO:0000269" key="20">
    <source>
    </source>
</evidence>
<evidence type="ECO:0000269" key="21">
    <source>
    </source>
</evidence>
<evidence type="ECO:0000269" key="22">
    <source>
    </source>
</evidence>
<evidence type="ECO:0000269" key="23">
    <source>
    </source>
</evidence>
<evidence type="ECO:0000269" key="24">
    <source>
    </source>
</evidence>
<evidence type="ECO:0000269" key="25">
    <source>
    </source>
</evidence>
<evidence type="ECO:0000269" key="26">
    <source>
    </source>
</evidence>
<evidence type="ECO:0000269" key="27">
    <source>
    </source>
</evidence>
<evidence type="ECO:0000269" key="28">
    <source>
    </source>
</evidence>
<evidence type="ECO:0000269" key="29">
    <source>
    </source>
</evidence>
<evidence type="ECO:0000269" key="30">
    <source>
    </source>
</evidence>
<evidence type="ECO:0000269" key="31">
    <source>
    </source>
</evidence>
<evidence type="ECO:0000269" key="32">
    <source>
    </source>
</evidence>
<evidence type="ECO:0000269" key="33">
    <source>
    </source>
</evidence>
<evidence type="ECO:0000269" key="34">
    <source>
    </source>
</evidence>
<evidence type="ECO:0000269" key="35">
    <source>
    </source>
</evidence>
<evidence type="ECO:0000269" key="36">
    <source>
    </source>
</evidence>
<evidence type="ECO:0000269" key="37">
    <source>
    </source>
</evidence>
<evidence type="ECO:0000269" key="38">
    <source>
    </source>
</evidence>
<evidence type="ECO:0000269" key="39">
    <source>
    </source>
</evidence>
<evidence type="ECO:0000269" key="40">
    <source>
    </source>
</evidence>
<evidence type="ECO:0000269" key="41">
    <source>
    </source>
</evidence>
<evidence type="ECO:0000269" key="42">
    <source>
    </source>
</evidence>
<evidence type="ECO:0000269" key="43">
    <source>
    </source>
</evidence>
<evidence type="ECO:0000269" key="44">
    <source>
    </source>
</evidence>
<evidence type="ECO:0000269" key="45">
    <source>
    </source>
</evidence>
<evidence type="ECO:0000269" key="46">
    <source>
    </source>
</evidence>
<evidence type="ECO:0000269" key="47">
    <source>
    </source>
</evidence>
<evidence type="ECO:0000269" key="48">
    <source>
    </source>
</evidence>
<evidence type="ECO:0000269" key="49">
    <source>
    </source>
</evidence>
<evidence type="ECO:0000269" key="50">
    <source>
    </source>
</evidence>
<evidence type="ECO:0000269" key="51">
    <source ref="3"/>
</evidence>
<evidence type="ECO:0000305" key="52"/>
<evidence type="ECO:0000312" key="53">
    <source>
        <dbReference type="HGNC" id="HGNC:9829"/>
    </source>
</evidence>
<evidence type="ECO:0007744" key="54">
    <source>
    </source>
</evidence>
<evidence type="ECO:0007744" key="55">
    <source>
    </source>
</evidence>
<evidence type="ECO:0007744" key="56">
    <source>
    </source>
</evidence>
<evidence type="ECO:0007744" key="57">
    <source>
    </source>
</evidence>
<evidence type="ECO:0007829" key="58">
    <source>
        <dbReference type="PDB" id="6PTW"/>
    </source>
</evidence>
<evidence type="ECO:0007829" key="59">
    <source>
        <dbReference type="PDB" id="6VJJ"/>
    </source>
</evidence>
<evidence type="ECO:0007829" key="60">
    <source>
        <dbReference type="PDB" id="6XGV"/>
    </source>
</evidence>
<evidence type="ECO:0007829" key="61">
    <source>
        <dbReference type="PDB" id="6XI7"/>
    </source>
</evidence>
<evidence type="ECO:0007829" key="62">
    <source>
        <dbReference type="PDB" id="7JHP"/>
    </source>
</evidence>
<evidence type="ECO:0007829" key="63">
    <source>
        <dbReference type="PDB" id="7Z38"/>
    </source>
</evidence>
<evidence type="ECO:0007829" key="64">
    <source>
        <dbReference type="PDB" id="8CPD"/>
    </source>
</evidence>
<evidence type="ECO:0007829" key="65">
    <source>
        <dbReference type="PDB" id="8GAE"/>
    </source>
</evidence>
<evidence type="ECO:0007829" key="66">
    <source>
        <dbReference type="PDB" id="8T74"/>
    </source>
</evidence>
<comment type="function">
    <text evidence="9 11 18 19 20 25 26 49">Serine/threonine-protein kinase that acts as a regulatory link between the membrane-associated Ras GTPases and the MAPK/ERK cascade, and this critical regulatory link functions as a switch determining cell fate decisions including proliferation, differentiation, apoptosis, survival and oncogenic transformation. RAF1 activation initiates a mitogen-activated protein kinase (MAPK) cascade that comprises a sequential phosphorylation of the dual-specific MAPK kinases (MAP2K1/MEK1 and MAP2K2/MEK2) and the extracellular signal-regulated kinases (MAPK3/ERK1 and MAPK1/ERK2). The phosphorylated form of RAF1 (on residues Ser-338 and Ser-339, by PAK1) phosphorylates BAD/Bcl2-antagonist of cell death at 'Ser-75'. Phosphorylates adenylyl cyclases: ADCY2, ADCY5 and ADCY6, resulting in their activation. Phosphorylates PPP1R12A resulting in inhibition of the phosphatase activity. Phosphorylates TNNT2/cardiac muscle troponin T. Can promote NF-kB activation and inhibit signal transducers involved in motility (ROCK2), apoptosis (MAP3K5/ASK1 and STK3/MST2), proliferation and angiogenesis (RB1). Can protect cells from apoptosis also by translocating to the mitochondria where it binds BCL2 and displaces BAD/Bcl2-antagonist of cell death. Regulates Rho signaling and migration, and is required for normal wound healing. Plays a role in the oncogenic transformation of epithelial cells via repression of the TJ protein, occludin (OCLN) by inducing the up-regulation of a transcriptional repressor SNAI2/SLUG, which induces down-regulation of OCLN. Restricts caspase activation in response to selected stimuli, notably Fas stimulation, pathogen-mediated macrophage apoptosis, and erythroid differentiation.</text>
</comment>
<comment type="catalytic activity">
    <reaction evidence="29">
        <text>L-seryl-[protein] + ATP = O-phospho-L-seryl-[protein] + ADP + H(+)</text>
        <dbReference type="Rhea" id="RHEA:17989"/>
        <dbReference type="Rhea" id="RHEA-COMP:9863"/>
        <dbReference type="Rhea" id="RHEA-COMP:11604"/>
        <dbReference type="ChEBI" id="CHEBI:15378"/>
        <dbReference type="ChEBI" id="CHEBI:29999"/>
        <dbReference type="ChEBI" id="CHEBI:30616"/>
        <dbReference type="ChEBI" id="CHEBI:83421"/>
        <dbReference type="ChEBI" id="CHEBI:456216"/>
        <dbReference type="EC" id="2.7.11.1"/>
    </reaction>
    <physiologicalReaction direction="left-to-right" evidence="29">
        <dbReference type="Rhea" id="RHEA:17990"/>
    </physiologicalReaction>
</comment>
<comment type="catalytic activity">
    <reaction evidence="29">
        <text>L-threonyl-[protein] + ATP = O-phospho-L-threonyl-[protein] + ADP + H(+)</text>
        <dbReference type="Rhea" id="RHEA:46608"/>
        <dbReference type="Rhea" id="RHEA-COMP:11060"/>
        <dbReference type="Rhea" id="RHEA-COMP:11605"/>
        <dbReference type="ChEBI" id="CHEBI:15378"/>
        <dbReference type="ChEBI" id="CHEBI:30013"/>
        <dbReference type="ChEBI" id="CHEBI:30616"/>
        <dbReference type="ChEBI" id="CHEBI:61977"/>
        <dbReference type="ChEBI" id="CHEBI:456216"/>
        <dbReference type="EC" id="2.7.11.1"/>
    </reaction>
    <physiologicalReaction direction="left-to-right" evidence="29">
        <dbReference type="Rhea" id="RHEA:46609"/>
    </physiologicalReaction>
</comment>
<comment type="cofactor">
    <cofactor>
        <name>Zn(2+)</name>
        <dbReference type="ChEBI" id="CHEBI:29105"/>
    </cofactor>
    <text>Binds 2 Zn(2+) ions per subunit.</text>
</comment>
<comment type="activity regulation">
    <text evidence="7 8 10 12 15 25 30 33">Regulation is a highly complex process involving membrane recruitment, protein-protein interactions, dimerization, and phosphorylation/dephosphorylation events. Ras-GTP recruits RAF1 to the membrane, thereby promoting its activation. The inactive conformation of RAF1 is maintained by autoinhibitory interactions occurring between the N-terminal regulatory and the C-terminal catalytic domains and by the binding of a 14-3-3 protein that contacts two phosphorylation sites, Ser-259 and Ser-621. Upon mitogenic stimulation, Ras and PPP2R1A cooperate to release autoinhibition and the subsequent phosphorylation of activating sites: Ser-338, Tyr-341, Thr-491, and Ser-494, yields a fully active kinase. Through a negative feedback mechanism involving MAPK1/ERK2, RAF1 is phosphorylated on Ser-29, Ser-43, Ser-289, Ser-296, Ser-301 and Ser-642 by MAPK1/ERK2, which yields an inactive, desensitized kinase. The signaling-competent conformation of RAF1 is finally re-established by the coordinated action of PIN1, a prolyl isomerase that converts pSer and pThr residues from the cis to the trans conformation, which is preferentially recognized and dephosphorylated by PPP2R1A. Activated by homodimerization and heterodimerization (with BRAF). Also regulated through association with other proteins such as KSR2, CNKSR1/CNK1, PEBP1/RKIP, PHB/prohibitin and SPRY4. PEBP1/RKIP acts by dissociating RAF1 from its substrates MAP2K1/MEK1 and MAP2K2/MEK2. PHB/prohibitin facilitates the displacement of 14-3-3 from RAF1 by activated Ras, thereby promoting cell membrane localization and phosphorylation of RAF1 at the activating Ser-338. SPRY4 inhibits Ras-independent, but not Ras-dependent, activation of RAF1. CNKSR1/CNK1 regulates Src-mediated RAF1 activation.</text>
</comment>
<comment type="subunit">
    <text evidence="1 2 7 8 9 11 12 14 15 18 19 20 21 23 24 30 33 35 36 37 38 39 40 42 43 49">Monomer. Homodimer. Heterodimerizes with BRAF and this heterodimer possesses a highly increased kinase activity compared to the respective homodimers or monomers (PubMed:16508002). Heterodimerization is mitogen-regulated and enhanced by 14-3-3 proteins (PubMed:16508002). MAPK1/ERK2 activation can induce a negative feedback that promotes the dissociation of the heterodimer (PubMed:16508002). Forms a multiprotein complex with Ras (M-Ras/MRAS), SHOC2 and protein phosphatase 1 (PPP1CA, PPP1CB and PPP1CC) (PubMed:16630891). Interacts with LZTR1 (PubMed:30368668). Interacts with Ras proteins; the interaction is antagonized by RIN1 (PubMed:11784866). Weakly interacts with RIT1. Interacts (via N-terminus) with RGS14 (via RBD domains); the interaction mediates the formation of a ternary complex with BRAF, a ternary complex inhibited by GNAI1 (By similarity). Probably forms a complex composed of chaperones HSP90 and HSP70, co-chaperones CDC37, PPP5C, TSC1 and client protein TSC2, CDK4, AKT, RAF1 and NR3C1; this complex does not contain co-chaperones STIP1/HOP and PTGES3/p23 (PubMed:29127155). Interacts with STK3/MST2; the interaction inhibits its pro-apoptotic activity (PubMed:15618521). Interacts (when phosphorylated at Ser-259) with YWHAZ (unphosphorylated at 'Thr-232') (PubMed:31024343, PubMed:9360956). Interacts with MAP2K1/MEK1 and MAP2K2/MEK2 (By similarity). Interacts with MAP3K5/ASF1 (via N-terminus) and this interaction inhibits the proapoptotic function of MAP3K5/ASK1 (PubMed:11427728). Interacts with PAK1 (via kinase domain) (PubMed:11733498). The phosphorylated form interacts with PIN1 (By similarity). The Ser-338 and Ser-339 phosphorylated form (by PAK1) interacts with BCL2 (PubMed:15849194). Interacts with PEBP1/RKIP and this interaction is enhanced if RAF1 is phosphorylated on residues Ser-338, Ser-339, Tyr-340 and Tyr-341 (PubMed:18294816). Interacts with ADCY2, ADCY5, ADCY6, DGKH, RCAN1/DSCR1, PPP1R12A, PKB/AKT1, PPP2CA, PPP2R1B, SPRY2, SPRY4, CNKSR1/CNK1, KSR2 and PHB/prohibitin (PubMed:10576742, PubMed:10801873, PubMed:11719507, PubMed:12717443, PubMed:15385642, PubMed:15935327, PubMed:19710016). Interacts with ROCK2 (By similarity). In its active form, interacts with PRMT5 (PubMed:21917714). Interacts with FAM83B; displaces 14-3-3 proteins from RAF1 and activates RAF1 (PubMed:22886302). Interacts with PDE8A; the interaction promotes RAF1 activity (PubMed:23509299). Interacts with MFHAS1 (PubMed:23327923). Interacts with GLS (PubMed:22538822). Interacts with NEK10 and MAP2K1; the interaction is direct with NEK10 and required for ERK1/2-signaling pathway activation in response to UV irradiation (PubMed:20956560).</text>
</comment>
<comment type="interaction">
    <interactant intactId="EBI-365996">
        <id>P04049</id>
    </interactant>
    <interactant intactId="EBI-77613">
        <id>P05067</id>
        <label>APP</label>
    </interactant>
    <organismsDiffer>false</organismsDiffer>
    <experiments>3</experiments>
</comment>
<comment type="interaction">
    <interactant intactId="EBI-365996">
        <id>P04049</id>
    </interactant>
    <interactant intactId="EBI-355275">
        <id>O95816</id>
        <label>BAG2</label>
    </interactant>
    <organismsDiffer>false</organismsDiffer>
    <experiments>12</experiments>
</comment>
<comment type="interaction">
    <interactant intactId="EBI-365996">
        <id>P04049</id>
    </interactant>
    <interactant intactId="EBI-365980">
        <id>P15056</id>
        <label>BRAF</label>
    </interactant>
    <organismsDiffer>false</organismsDiffer>
    <experiments>72</experiments>
</comment>
<comment type="interaction">
    <interactant intactId="EBI-365996">
        <id>P04049</id>
    </interactant>
    <interactant intactId="EBI-78060">
        <id>Q14790</id>
        <label>CASP8</label>
    </interactant>
    <organismsDiffer>false</organismsDiffer>
    <experiments>3</experiments>
</comment>
<comment type="interaction">
    <interactant intactId="EBI-365996">
        <id>P04049</id>
    </interactant>
    <interactant intactId="EBI-356673">
        <id>P49368</id>
        <label>CCT3</label>
    </interactant>
    <organismsDiffer>false</organismsDiffer>
    <experiments>8</experiments>
</comment>
<comment type="interaction">
    <interactant intactId="EBI-365996">
        <id>P04049</id>
    </interactant>
    <interactant intactId="EBI-747671">
        <id>P30304</id>
        <label>CDC25A</label>
    </interactant>
    <organismsDiffer>false</organismsDiffer>
    <experiments>4</experiments>
</comment>
<comment type="interaction">
    <interactant intactId="EBI-365996">
        <id>P04049</id>
    </interactant>
    <interactant intactId="EBI-295634">
        <id>Q16543</id>
        <label>CDC37</label>
    </interactant>
    <organismsDiffer>false</organismsDiffer>
    <experiments>20</experiments>
</comment>
<comment type="interaction">
    <interactant intactId="EBI-365996">
        <id>P04049</id>
    </interactant>
    <interactant intactId="EBI-536811">
        <id>P31327</id>
        <label>CPS1</label>
    </interactant>
    <organismsDiffer>false</organismsDiffer>
    <experiments>4</experiments>
</comment>
<comment type="interaction">
    <interactant intactId="EBI-365996">
        <id>P04049</id>
    </interactant>
    <interactant intactId="EBI-350145">
        <id>P01112</id>
        <label>HRAS</label>
    </interactant>
    <organismsDiffer>false</organismsDiffer>
    <experiments>27</experiments>
</comment>
<comment type="interaction">
    <interactant intactId="EBI-365996">
        <id>P04049</id>
    </interactant>
    <interactant intactId="EBI-296047">
        <id>P07900</id>
        <label>HSP90AA1</label>
    </interactant>
    <organismsDiffer>false</organismsDiffer>
    <experiments>15</experiments>
</comment>
<comment type="interaction">
    <interactant intactId="EBI-365996">
        <id>P04049</id>
    </interactant>
    <interactant intactId="EBI-352572">
        <id>P08238</id>
        <label>HSP90AB1</label>
    </interactant>
    <organismsDiffer>false</organismsDiffer>
    <experiments>17</experiments>
</comment>
<comment type="interaction">
    <interactant intactId="EBI-365996">
        <id>P04049</id>
    </interactant>
    <interactant intactId="EBI-354921">
        <id>P11021</id>
        <label>HSPA5</label>
    </interactant>
    <organismsDiffer>false</organismsDiffer>
    <experiments>5</experiments>
</comment>
<comment type="interaction">
    <interactant intactId="EBI-365996">
        <id>P04049</id>
    </interactant>
    <interactant intactId="EBI-367415">
        <id>P01116</id>
        <label>KRAS</label>
    </interactant>
    <organismsDiffer>false</organismsDiffer>
    <experiments>6</experiments>
</comment>
<comment type="interaction">
    <interactant intactId="EBI-365996">
        <id>P04049</id>
    </interactant>
    <interactant intactId="EBI-367427">
        <id>P01116-2</id>
        <label>KRAS</label>
    </interactant>
    <organismsDiffer>false</organismsDiffer>
    <experiments>3</experiments>
</comment>
<comment type="interaction">
    <interactant intactId="EBI-365996">
        <id>P04049</id>
    </interactant>
    <interactant intactId="EBI-486984">
        <id>Q8IVT5</id>
        <label>KSR1</label>
    </interactant>
    <organismsDiffer>false</organismsDiffer>
    <experiments>5</experiments>
</comment>
<comment type="interaction">
    <interactant intactId="EBI-365996">
        <id>P04049</id>
    </interactant>
    <interactant intactId="EBI-492564">
        <id>Q02750</id>
        <label>MAP2K1</label>
    </interactant>
    <organismsDiffer>false</organismsDiffer>
    <experiments>39</experiments>
</comment>
<comment type="interaction">
    <interactant intactId="EBI-365996">
        <id>P04049</id>
    </interactant>
    <interactant intactId="EBI-1056930">
        <id>P36507</id>
        <label>MAP2K2</label>
    </interactant>
    <organismsDiffer>false</organismsDiffer>
    <experiments>7</experiments>
</comment>
<comment type="interaction">
    <interactant intactId="EBI-365996">
        <id>P04049</id>
    </interactant>
    <interactant intactId="EBI-1051875">
        <id>Q15773</id>
        <label>MLF2</label>
    </interactant>
    <organismsDiffer>false</organismsDiffer>
    <experiments>4</experiments>
</comment>
<comment type="interaction">
    <interactant intactId="EBI-365996">
        <id>P04049</id>
    </interactant>
    <interactant intactId="EBI-5278441">
        <id>Q12968</id>
        <label>NFATC3</label>
    </interactant>
    <organismsDiffer>false</organismsDiffer>
    <experiments>2</experiments>
</comment>
<comment type="interaction">
    <interactant intactId="EBI-365996">
        <id>P04049</id>
    </interactant>
    <interactant intactId="EBI-721993">
        <id>P01111</id>
        <label>NRAS</label>
    </interactant>
    <organismsDiffer>false</organismsDiffer>
    <experiments>12</experiments>
</comment>
<comment type="interaction">
    <interactant intactId="EBI-365996">
        <id>P04049</id>
    </interactant>
    <interactant intactId="EBI-536879">
        <id>O43482</id>
        <label>OIP5</label>
    </interactant>
    <organismsDiffer>false</organismsDiffer>
    <experiments>4</experiments>
</comment>
<comment type="interaction">
    <interactant intactId="EBI-365996">
        <id>P04049</id>
    </interactant>
    <interactant intactId="EBI-1307">
        <id>Q13153</id>
        <label>PAK1</label>
    </interactant>
    <organismsDiffer>false</organismsDiffer>
    <experiments>2</experiments>
</comment>
<comment type="interaction">
    <interactant intactId="EBI-365996">
        <id>P04049</id>
    </interactant>
    <interactant intactId="EBI-1045887">
        <id>Q13177</id>
        <label>PAK2</label>
    </interactant>
    <organismsDiffer>false</organismsDiffer>
    <experiments>2</experiments>
</comment>
<comment type="interaction">
    <interactant intactId="EBI-365996">
        <id>P04049</id>
    </interactant>
    <interactant intactId="EBI-15654365">
        <id>Q6TCH7</id>
        <label>PAQR3</label>
    </interactant>
    <organismsDiffer>false</organismsDiffer>
    <experiments>3</experiments>
</comment>
<comment type="interaction">
    <interactant intactId="EBI-365996">
        <id>P04049</id>
    </interactant>
    <interactant intactId="EBI-716384">
        <id>P30086</id>
        <label>PEBP1</label>
    </interactant>
    <organismsDiffer>false</organismsDiffer>
    <experiments>10</experiments>
</comment>
<comment type="interaction">
    <interactant intactId="EBI-365996">
        <id>P04049</id>
    </interactant>
    <interactant intactId="EBI-8563667">
        <id>Q96S96</id>
        <label>PEBP4</label>
    </interactant>
    <organismsDiffer>false</organismsDiffer>
    <experiments>4</experiments>
</comment>
<comment type="interaction">
    <interactant intactId="EBI-365996">
        <id>P04049</id>
    </interactant>
    <interactant intactId="EBI-714158">
        <id>Q13526</id>
        <label>PIN1</label>
    </interactant>
    <organismsDiffer>false</organismsDiffer>
    <experiments>2</experiments>
</comment>
<comment type="interaction">
    <interactant intactId="EBI-365996">
        <id>P04049</id>
    </interactant>
    <interactant intactId="EBI-353408">
        <id>P14618</id>
        <label>PKM</label>
    </interactant>
    <organismsDiffer>false</organismsDiffer>
    <experiments>3</experiments>
</comment>
<comment type="interaction">
    <interactant intactId="EBI-365996">
        <id>P04049</id>
    </interactant>
    <interactant intactId="EBI-712311">
        <id>P67775</id>
        <label>PPP2CA</label>
    </interactant>
    <organismsDiffer>false</organismsDiffer>
    <experiments>2</experiments>
</comment>
<comment type="interaction">
    <interactant intactId="EBI-365996">
        <id>P04049</id>
    </interactant>
    <interactant intactId="EBI-1266156">
        <id>Q13362</id>
        <label>PPP2R5C</label>
    </interactant>
    <organismsDiffer>false</organismsDiffer>
    <experiments>2</experiments>
</comment>
<comment type="interaction">
    <interactant intactId="EBI-365996">
        <id>P04049</id>
    </interactant>
    <interactant intactId="EBI-365996">
        <id>P04049</id>
        <label>RAF1</label>
    </interactant>
    <organismsDiffer>false</organismsDiffer>
    <experiments>6</experiments>
</comment>
<comment type="interaction">
    <interactant intactId="EBI-365996">
        <id>P04049</id>
    </interactant>
    <interactant intactId="EBI-491414">
        <id>P62834</id>
        <label>RAP1A</label>
    </interactant>
    <organismsDiffer>false</organismsDiffer>
    <experiments>2</experiments>
</comment>
<comment type="interaction">
    <interactant intactId="EBI-365996">
        <id>P04049</id>
    </interactant>
    <interactant intactId="EBI-491274">
        <id>P06400</id>
        <label>RB1</label>
    </interactant>
    <organismsDiffer>false</organismsDiffer>
    <experiments>3</experiments>
</comment>
<comment type="interaction">
    <interactant intactId="EBI-365996">
        <id>P04049</id>
    </interactant>
    <interactant intactId="EBI-1541912">
        <id>P53805-2</id>
        <label>RCAN1</label>
    </interactant>
    <organismsDiffer>false</organismsDiffer>
    <experiments>4</experiments>
</comment>
<comment type="interaction">
    <interactant intactId="EBI-365996">
        <id>P04049</id>
    </interactant>
    <interactant intactId="EBI-476295">
        <id>P31947</id>
        <label>SFN</label>
    </interactant>
    <organismsDiffer>false</organismsDiffer>
    <experiments>9</experiments>
</comment>
<comment type="interaction">
    <interactant intactId="EBI-365996">
        <id>P04049</id>
    </interactant>
    <interactant intactId="EBI-992580">
        <id>Q13188</id>
        <label>STK3</label>
    </interactant>
    <organismsDiffer>false</organismsDiffer>
    <experiments>6</experiments>
</comment>
<comment type="interaction">
    <interactant intactId="EBI-365996">
        <id>P04049</id>
    </interactant>
    <interactant intactId="EBI-357085">
        <id>Q9UNE7</id>
        <label>STUB1</label>
    </interactant>
    <organismsDiffer>false</organismsDiffer>
    <experiments>8</experiments>
</comment>
<comment type="interaction">
    <interactant intactId="EBI-365996">
        <id>P04049</id>
    </interactant>
    <interactant intactId="EBI-355175">
        <id>Q3ZCQ8</id>
        <label>TIMM50</label>
    </interactant>
    <organismsDiffer>false</organismsDiffer>
    <experiments>7</experiments>
</comment>
<comment type="interaction">
    <interactant intactId="EBI-365996">
        <id>P04049</id>
    </interactant>
    <interactant intactId="EBI-359815">
        <id>P31946</id>
        <label>YWHAB</label>
    </interactant>
    <organismsDiffer>false</organismsDiffer>
    <experiments>38</experiments>
</comment>
<comment type="interaction">
    <interactant intactId="EBI-365996">
        <id>P04049</id>
    </interactant>
    <interactant intactId="EBI-356498">
        <id>P62258</id>
        <label>YWHAE</label>
    </interactant>
    <organismsDiffer>false</organismsDiffer>
    <experiments>24</experiments>
</comment>
<comment type="interaction">
    <interactant intactId="EBI-365996">
        <id>P04049</id>
    </interactant>
    <interactant intactId="EBI-359832">
        <id>P61981</id>
        <label>YWHAG</label>
    </interactant>
    <organismsDiffer>false</organismsDiffer>
    <experiments>24</experiments>
</comment>
<comment type="interaction">
    <interactant intactId="EBI-365996">
        <id>P04049</id>
    </interactant>
    <interactant intactId="EBI-306940">
        <id>Q04917</id>
        <label>YWHAH</label>
    </interactant>
    <organismsDiffer>false</organismsDiffer>
    <experiments>27</experiments>
</comment>
<comment type="interaction">
    <interactant intactId="EBI-365996">
        <id>P04049</id>
    </interactant>
    <interactant intactId="EBI-359854">
        <id>P27348</id>
        <label>YWHAQ</label>
    </interactant>
    <organismsDiffer>false</organismsDiffer>
    <experiments>23</experiments>
</comment>
<comment type="interaction">
    <interactant intactId="EBI-365996">
        <id>P04049</id>
    </interactant>
    <interactant intactId="EBI-347088">
        <id>P63104</id>
        <label>YWHAZ</label>
    </interactant>
    <organismsDiffer>false</organismsDiffer>
    <experiments>32</experiments>
</comment>
<comment type="interaction">
    <interactant intactId="EBI-365996">
        <id>P04049</id>
    </interactant>
    <interactant intactId="EBI-644267">
        <id>P32883</id>
        <label>Kras</label>
    </interactant>
    <organismsDiffer>true</organismsDiffer>
    <experiments>2</experiments>
</comment>
<comment type="interaction">
    <interactant intactId="EBI-365996">
        <id>P04049</id>
    </interactant>
    <interactant intactId="EBI-642911">
        <id>P28301</id>
        <label>Lox</label>
    </interactant>
    <organismsDiffer>true</organismsDiffer>
    <experiments>2</experiments>
</comment>
<comment type="interaction">
    <interactant intactId="EBI-365996">
        <id>P04049</id>
    </interactant>
    <interactant intactId="EBI-9549291">
        <id>Q9ESN9-2</id>
        <label>Mapk8ip3</label>
    </interactant>
    <organismsDiffer>true</organismsDiffer>
    <experiments>2</experiments>
</comment>
<comment type="interaction">
    <interactant intactId="EBI-365996">
        <id>P04049</id>
    </interactant>
    <interactant intactId="EBI-2548993">
        <id>P03495</id>
        <label>NS</label>
    </interactant>
    <organismsDiffer>true</organismsDiffer>
    <experiments>2</experiments>
</comment>
<comment type="interaction">
    <interactant intactId="EBI-365996">
        <id>P04049</id>
    </interactant>
    <interactant intactId="EBI-7016711">
        <id>O39474</id>
        <label>NS5A</label>
    </interactant>
    <organismsDiffer>true</organismsDiffer>
    <experiments>4</experiments>
</comment>
<comment type="interaction">
    <interactant intactId="EBI-365996">
        <id>P04049</id>
    </interactant>
    <interactant intactId="EBI-14838">
        <id>P01120</id>
        <label>RAS2</label>
    </interactant>
    <organismsDiffer>true</organismsDiffer>
    <experiments>2</experiments>
</comment>
<comment type="subcellular location">
    <subcellularLocation>
        <location>Cytoplasm</location>
    </subcellularLocation>
    <subcellularLocation>
        <location>Cell membrane</location>
    </subcellularLocation>
    <subcellularLocation>
        <location>Mitochondrion</location>
    </subcellularLocation>
    <subcellularLocation>
        <location>Nucleus</location>
    </subcellularLocation>
    <text>Colocalizes with RGS14 and BRAF in both the cytoplasm and membranes. Phosphorylation at Ser-259 impairs its membrane accumulation. Recruited to the cell membrane by the active Ras protein. Phosphorylation at Ser-338 and Ser-339 by PAK1 is required for its mitochondrial localization. Retinoic acid-induced Ser-621 phosphorylated form of RAF1 is predominantly localized at the nucleus.</text>
</comment>
<comment type="alternative products">
    <event type="alternative splicing"/>
    <isoform>
        <id>P04049-1</id>
        <name>1</name>
        <name>6C</name>
        <sequence type="displayed"/>
    </isoform>
    <isoform>
        <id>P04049-2</id>
        <name>2</name>
        <name>1A</name>
        <sequence type="described" ref="VSP_034649"/>
    </isoform>
</comment>
<comment type="tissue specificity">
    <text evidence="32">In skeletal muscle, isoform 1 is more abundant than isoform 2.</text>
</comment>
<comment type="PTM">
    <text evidence="7 8 10 12 13 17 20 22 24 25 31 36 44 45 46 47 48 50">Phosphorylation at Thr-269, Ser-338, Tyr-341, Thr-491 and Ser-494 results in its activation. Phosphorylation at Ser-29, Ser-43, Ser-289, Ser-296, Ser-301 and Ser-642 by MAPK1/ERK2 results in its inactivation. Phosphorylation at Ser-259 induces the interaction with YWHAZ and inactivates kinase activity. Dephosphorylation of Ser-259 by the SHOC2-MRAS-PP1c (SMP) complex consisting of SHOC2, GTP-bound M-Ras/MRAS and the catalytic subunit of protein phosphatase 1 (PPP1CA, PPP1CB or PPP1CC); this relieves inactivation and stimulates kinase activity (PubMed:35768504, PubMed:35831509, PubMed:35830882). Phosphorylation at Ser-338 by PAK1 and PAK5 and Ser-339 by PAK1 is required for its mitochondrial localization. Phosphorylation at Ser-621 in response to growth factor treatment stabilizes the protein, possibly by preventing proteasomal degradation. Phosphorylation at Ser-289, Ser-296, Ser-301, Ser-338 and Ser-621 are somehow linked to the methylation potential of cells. Treatment of cells with HGF in the presence of the methylation inhibitor 5'-methylthioadenosine (MTA) results in increased phosphorylation at Ser-338 and Ser-621 and decreased phosphorylation at Ser-296, Ser-301 and Ser-338. Dephosphorylation at Ser-338 by PPP5C results in an activity decrease.</text>
</comment>
<comment type="PTM">
    <text evidence="36">Methylated at Arg-563 in response to EGF treatment. This modification leads to destabilization of the protein, possibly through proteasomal degradation.</text>
</comment>
<comment type="disease" evidence="28 29 34">
    <disease id="DI-02075">
        <name>Noonan syndrome 5</name>
        <acronym>NS5</acronym>
        <description>A form of Noonan syndrome, a disease characterized by short stature, facial dysmorphic features such as hypertelorism, a downward eyeslant and low-set posteriorly rotated ears, and a high incidence of congenital heart defects and hypertrophic cardiomyopathy. Other features can include a short neck with webbing or redundancy of skin, deafness, motor delay, variable intellectual deficits, multiple skeletal defects, cryptorchidism, and bleeding diathesis. Individuals with Noonan syndrome are at risk of juvenile myelomonocytic leukemia, a myeloproliferative disorder characterized by excessive production of myelomonocytic cells.</description>
        <dbReference type="MIM" id="611553"/>
    </disease>
    <text>The disease is caused by variants affecting the gene represented in this entry.</text>
</comment>
<comment type="disease" evidence="29">
    <disease id="DI-01889">
        <name>LEOPARD syndrome 2</name>
        <acronym>LPRD2</acronym>
        <description>A disorder characterized by lentigines, electrocardiographic conduction abnormalities, ocular hypertelorism, pulmonic stenosis, abnormalities of genitalia, retardation of growth, and sensorineural deafness.</description>
        <dbReference type="MIM" id="611554"/>
    </disease>
    <text>The disease is caused by variants affecting the gene represented in this entry.</text>
</comment>
<comment type="disease" evidence="41">
    <disease id="DI-04172">
        <name>Cardiomyopathy, dilated, 1NN</name>
        <acronym>CMD1NN</acronym>
        <description>A disorder characterized by ventricular dilation and impaired systolic function, resulting in congestive heart failure and arrhythmia. Patients are at risk of premature death.</description>
        <dbReference type="MIM" id="615916"/>
    </disease>
    <text>The disease is caused by variants affecting the gene represented in this entry.</text>
</comment>
<comment type="similarity">
    <text evidence="52">Belongs to the protein kinase superfamily. TKL Ser/Thr protein kinase family. RAF subfamily.</text>
</comment>
<comment type="online information" name="Atlas of Genetics and Cytogenetics in Oncology and Haematology">
    <link uri="https://atlasgeneticsoncology.org/gene/42032/RAF1"/>
</comment>
<protein>
    <recommendedName>
        <fullName evidence="52">RAF proto-oncogene serine/threonine-protein kinase</fullName>
        <ecNumber evidence="29">2.7.11.1</ecNumber>
    </recommendedName>
    <alternativeName>
        <fullName>Proto-oncogene c-RAF</fullName>
        <shortName>cRaf</shortName>
    </alternativeName>
    <alternativeName>
        <fullName>Raf-1</fullName>
    </alternativeName>
</protein>
<dbReference type="EC" id="2.7.11.1" evidence="29"/>
<dbReference type="EMBL" id="X03484">
    <property type="protein sequence ID" value="CAA27204.1"/>
    <property type="molecule type" value="mRNA"/>
</dbReference>
<dbReference type="EMBL" id="AY271661">
    <property type="protein sequence ID" value="AAP03432.1"/>
    <property type="molecule type" value="Genomic_DNA"/>
</dbReference>
<dbReference type="EMBL" id="AK312248">
    <property type="protein sequence ID" value="BAG35180.1"/>
    <property type="molecule type" value="mRNA"/>
</dbReference>
<dbReference type="EMBL" id="EU332868">
    <property type="protein sequence ID" value="ABY87557.1"/>
    <property type="molecule type" value="Genomic_DNA"/>
</dbReference>
<dbReference type="EMBL" id="CH471055">
    <property type="protein sequence ID" value="EAW64134.1"/>
    <property type="molecule type" value="Genomic_DNA"/>
</dbReference>
<dbReference type="EMBL" id="BC018119">
    <property type="protein sequence ID" value="AAH18119.1"/>
    <property type="molecule type" value="mRNA"/>
</dbReference>
<dbReference type="EMBL" id="L00212">
    <property type="protein sequence ID" value="AAA60247.1"/>
    <property type="molecule type" value="Genomic_DNA"/>
</dbReference>
<dbReference type="EMBL" id="L00206">
    <property type="protein sequence ID" value="AAA60247.1"/>
    <property type="status" value="JOINED"/>
    <property type="molecule type" value="Genomic_DNA"/>
</dbReference>
<dbReference type="EMBL" id="L00207">
    <property type="protein sequence ID" value="AAA60247.1"/>
    <property type="status" value="JOINED"/>
    <property type="molecule type" value="Genomic_DNA"/>
</dbReference>
<dbReference type="EMBL" id="L00208">
    <property type="protein sequence ID" value="AAA60247.1"/>
    <property type="status" value="JOINED"/>
    <property type="molecule type" value="Genomic_DNA"/>
</dbReference>
<dbReference type="EMBL" id="L00209">
    <property type="protein sequence ID" value="AAA60247.1"/>
    <property type="status" value="JOINED"/>
    <property type="molecule type" value="Genomic_DNA"/>
</dbReference>
<dbReference type="EMBL" id="L00210">
    <property type="protein sequence ID" value="AAA60247.1"/>
    <property type="status" value="JOINED"/>
    <property type="molecule type" value="Genomic_DNA"/>
</dbReference>
<dbReference type="EMBL" id="L00211">
    <property type="protein sequence ID" value="AAA60247.1"/>
    <property type="status" value="JOINED"/>
    <property type="molecule type" value="Genomic_DNA"/>
</dbReference>
<dbReference type="EMBL" id="L00213">
    <property type="protein sequence ID" value="AAA60247.1"/>
    <property type="status" value="JOINED"/>
    <property type="molecule type" value="Genomic_DNA"/>
</dbReference>
<dbReference type="EMBL" id="M11376">
    <property type="protein sequence ID" value="AAA60247.1"/>
    <property type="status" value="JOINED"/>
    <property type="molecule type" value="Genomic_DNA"/>
</dbReference>
<dbReference type="EMBL" id="X54851">
    <property type="status" value="NOT_ANNOTATED_CDS"/>
    <property type="molecule type" value="Genomic_DNA"/>
</dbReference>
<dbReference type="CCDS" id="CCDS2612.1">
    <molecule id="P04049-1"/>
</dbReference>
<dbReference type="CCDS" id="CCDS87047.1">
    <molecule id="P04049-2"/>
</dbReference>
<dbReference type="PIR" id="A00637">
    <property type="entry name" value="TVHUF6"/>
</dbReference>
<dbReference type="PIR" id="S60341">
    <property type="entry name" value="S60341"/>
</dbReference>
<dbReference type="RefSeq" id="NP_001341618.1">
    <molecule id="P04049-2"/>
    <property type="nucleotide sequence ID" value="NM_001354689.3"/>
</dbReference>
<dbReference type="RefSeq" id="NP_001341619.1">
    <molecule id="P04049-1"/>
    <property type="nucleotide sequence ID" value="NM_001354690.3"/>
</dbReference>
<dbReference type="RefSeq" id="NP_002871.1">
    <molecule id="P04049-1"/>
    <property type="nucleotide sequence ID" value="NM_002880.4"/>
</dbReference>
<dbReference type="RefSeq" id="XP_005265412.1">
    <property type="nucleotide sequence ID" value="XM_005265355.2"/>
</dbReference>
<dbReference type="RefSeq" id="XP_011532276.1">
    <molecule id="P04049-1"/>
    <property type="nucleotide sequence ID" value="XM_011533974.3"/>
</dbReference>
<dbReference type="RefSeq" id="XP_047304605.1">
    <molecule id="P04049-1"/>
    <property type="nucleotide sequence ID" value="XM_047448649.1"/>
</dbReference>
<dbReference type="RefSeq" id="XP_047304606.1">
    <molecule id="P04049-1"/>
    <property type="nucleotide sequence ID" value="XM_047448650.1"/>
</dbReference>
<dbReference type="RefSeq" id="XP_054203389.1">
    <molecule id="P04049-1"/>
    <property type="nucleotide sequence ID" value="XM_054347414.1"/>
</dbReference>
<dbReference type="RefSeq" id="XP_054203390.1">
    <molecule id="P04049-1"/>
    <property type="nucleotide sequence ID" value="XM_054347415.1"/>
</dbReference>
<dbReference type="RefSeq" id="XP_054203391.1">
    <molecule id="P04049-1"/>
    <property type="nucleotide sequence ID" value="XM_054347416.1"/>
</dbReference>
<dbReference type="PDB" id="1C1Y">
    <property type="method" value="X-ray"/>
    <property type="resolution" value="1.90 A"/>
    <property type="chains" value="B=55-131"/>
</dbReference>
<dbReference type="PDB" id="1FAQ">
    <property type="method" value="NMR"/>
    <property type="chains" value="A=136-187"/>
</dbReference>
<dbReference type="PDB" id="1FAR">
    <property type="method" value="NMR"/>
    <property type="chains" value="A=136-187"/>
</dbReference>
<dbReference type="PDB" id="1GUA">
    <property type="method" value="X-ray"/>
    <property type="resolution" value="2.00 A"/>
    <property type="chains" value="B=51-131"/>
</dbReference>
<dbReference type="PDB" id="1RFA">
    <property type="method" value="NMR"/>
    <property type="chains" value="A=55-132"/>
</dbReference>
<dbReference type="PDB" id="3CU8">
    <property type="method" value="X-ray"/>
    <property type="resolution" value="2.40 A"/>
    <property type="chains" value="P/Q=256-264"/>
</dbReference>
<dbReference type="PDB" id="3IQJ">
    <property type="method" value="X-ray"/>
    <property type="resolution" value="1.15 A"/>
    <property type="chains" value="P=255-264"/>
</dbReference>
<dbReference type="PDB" id="3IQU">
    <property type="method" value="X-ray"/>
    <property type="resolution" value="1.05 A"/>
    <property type="chains" value="P=255-260"/>
</dbReference>
<dbReference type="PDB" id="3IQV">
    <property type="method" value="X-ray"/>
    <property type="resolution" value="1.20 A"/>
    <property type="chains" value="P=255-260"/>
</dbReference>
<dbReference type="PDB" id="3KUC">
    <property type="method" value="X-ray"/>
    <property type="resolution" value="1.92 A"/>
    <property type="chains" value="B=51-131"/>
</dbReference>
<dbReference type="PDB" id="3KUD">
    <property type="method" value="X-ray"/>
    <property type="resolution" value="2.15 A"/>
    <property type="chains" value="B=51-131"/>
</dbReference>
<dbReference type="PDB" id="3NKX">
    <property type="method" value="X-ray"/>
    <property type="resolution" value="2.40 A"/>
    <property type="chains" value="P/Q=255-264"/>
</dbReference>
<dbReference type="PDB" id="3O8I">
    <property type="method" value="X-ray"/>
    <property type="resolution" value="2.00 A"/>
    <property type="chains" value="B=255-264"/>
</dbReference>
<dbReference type="PDB" id="3OMV">
    <property type="method" value="X-ray"/>
    <property type="resolution" value="4.00 A"/>
    <property type="chains" value="A/B=323-618"/>
</dbReference>
<dbReference type="PDB" id="4FJ3">
    <property type="method" value="X-ray"/>
    <property type="resolution" value="1.95 A"/>
    <property type="chains" value="P=229-264"/>
</dbReference>
<dbReference type="PDB" id="4G0N">
    <property type="method" value="X-ray"/>
    <property type="resolution" value="2.45 A"/>
    <property type="chains" value="B=54-131"/>
</dbReference>
<dbReference type="PDB" id="4G3X">
    <property type="method" value="X-ray"/>
    <property type="resolution" value="3.25 A"/>
    <property type="chains" value="B=55-131"/>
</dbReference>
<dbReference type="PDB" id="4IEA">
    <property type="method" value="X-ray"/>
    <property type="resolution" value="1.70 A"/>
    <property type="chains" value="P=618-625"/>
</dbReference>
<dbReference type="PDB" id="4IHL">
    <property type="method" value="X-ray"/>
    <property type="resolution" value="2.20 A"/>
    <property type="chains" value="P=229-264"/>
</dbReference>
<dbReference type="PDB" id="6NTC">
    <property type="method" value="X-ray"/>
    <property type="resolution" value="2.90 A"/>
    <property type="chains" value="B=55-131"/>
</dbReference>
<dbReference type="PDB" id="6NTD">
    <property type="method" value="X-ray"/>
    <property type="resolution" value="3.15 A"/>
    <property type="chains" value="B=55-131"/>
</dbReference>
<dbReference type="PDB" id="6PTS">
    <property type="method" value="NMR"/>
    <property type="chains" value="D=56-187"/>
</dbReference>
<dbReference type="PDB" id="6PTW">
    <property type="method" value="NMR"/>
    <property type="chains" value="D=56-187"/>
</dbReference>
<dbReference type="PDB" id="6VJJ">
    <property type="method" value="X-ray"/>
    <property type="resolution" value="1.40 A"/>
    <property type="chains" value="B=52-131"/>
</dbReference>
<dbReference type="PDB" id="6XGU">
    <property type="method" value="X-ray"/>
    <property type="resolution" value="2.70 A"/>
    <property type="chains" value="B=52-188"/>
</dbReference>
<dbReference type="PDB" id="6XGV">
    <property type="method" value="X-ray"/>
    <property type="resolution" value="2.11 A"/>
    <property type="chains" value="B=52-188"/>
</dbReference>
<dbReference type="PDB" id="6XHA">
    <property type="method" value="X-ray"/>
    <property type="resolution" value="2.87 A"/>
    <property type="chains" value="B=52-188"/>
</dbReference>
<dbReference type="PDB" id="6XHB">
    <property type="method" value="X-ray"/>
    <property type="resolution" value="2.50 A"/>
    <property type="chains" value="B=52-188"/>
</dbReference>
<dbReference type="PDB" id="6XI7">
    <property type="method" value="X-ray"/>
    <property type="resolution" value="1.95 A"/>
    <property type="chains" value="B=52-188"/>
</dbReference>
<dbReference type="PDB" id="7JHP">
    <property type="method" value="X-ray"/>
    <property type="resolution" value="2.77 A"/>
    <property type="chains" value="C=55-187"/>
</dbReference>
<dbReference type="PDB" id="7Z37">
    <property type="method" value="EM"/>
    <property type="resolution" value="3.67 A"/>
    <property type="chains" value="CP1=1-648"/>
</dbReference>
<dbReference type="PDB" id="7Z38">
    <property type="method" value="EM"/>
    <property type="resolution" value="3.16 A"/>
    <property type="chains" value="C=1-648"/>
</dbReference>
<dbReference type="PDB" id="8A68">
    <property type="method" value="X-ray"/>
    <property type="resolution" value="1.60 A"/>
    <property type="chains" value="B=255-263"/>
</dbReference>
<dbReference type="PDB" id="8A6F">
    <property type="method" value="X-ray"/>
    <property type="resolution" value="1.60 A"/>
    <property type="chains" value="P=255-264"/>
</dbReference>
<dbReference type="PDB" id="8A6H">
    <property type="method" value="X-ray"/>
    <property type="resolution" value="1.60 A"/>
    <property type="chains" value="P=255-264"/>
</dbReference>
<dbReference type="PDB" id="8ATR">
    <property type="method" value="X-ray"/>
    <property type="resolution" value="1.70 A"/>
    <property type="chains" value="P=255-263"/>
</dbReference>
<dbReference type="PDB" id="8ATS">
    <property type="method" value="X-ray"/>
    <property type="resolution" value="1.40 A"/>
    <property type="chains" value="P=255-263"/>
</dbReference>
<dbReference type="PDB" id="8AV0">
    <property type="method" value="X-ray"/>
    <property type="resolution" value="1.50 A"/>
    <property type="chains" value="P=256-264"/>
</dbReference>
<dbReference type="PDB" id="8CHF">
    <property type="method" value="EM"/>
    <property type="resolution" value="4.25 A"/>
    <property type="chains" value="A/B=1-648"/>
</dbReference>
<dbReference type="PDB" id="8CPD">
    <property type="method" value="EM"/>
    <property type="resolution" value="3.46 A"/>
    <property type="chains" value="A/B=1-648"/>
</dbReference>
<dbReference type="PDB" id="8EPW">
    <property type="method" value="X-ray"/>
    <property type="resolution" value="2.00 A"/>
    <property type="chains" value="B=52-131"/>
</dbReference>
<dbReference type="PDB" id="8GAE">
    <property type="method" value="EM"/>
    <property type="resolution" value="3.30 A"/>
    <property type="chains" value="D=404-610"/>
</dbReference>
<dbReference type="PDB" id="8GFT">
    <property type="method" value="EM"/>
    <property type="resolution" value="3.80 A"/>
    <property type="chains" value="D=336-618"/>
</dbReference>
<dbReference type="PDB" id="8JOF">
    <property type="method" value="NMR"/>
    <property type="chains" value="A=51-131"/>
</dbReference>
<dbReference type="PDB" id="8JOG">
    <property type="method" value="NMR"/>
    <property type="chains" value="A=51-131"/>
</dbReference>
<dbReference type="PDB" id="8S42">
    <property type="method" value="X-ray"/>
    <property type="resolution" value="1.70 A"/>
    <property type="chains" value="P=255-263"/>
</dbReference>
<dbReference type="PDB" id="8T74">
    <property type="method" value="X-ray"/>
    <property type="resolution" value="1.65 A"/>
    <property type="chains" value="B=52-131"/>
</dbReference>
<dbReference type="PDB" id="8T75">
    <property type="method" value="X-ray"/>
    <property type="resolution" value="2.65 A"/>
    <property type="chains" value="B/D/F/H=52-188"/>
</dbReference>
<dbReference type="PDB" id="8U1L">
    <property type="method" value="EM"/>
    <property type="resolution" value="3.70 A"/>
    <property type="chains" value="C=2-648"/>
</dbReference>
<dbReference type="PDB" id="9AXA">
    <property type="method" value="EM"/>
    <property type="resolution" value="4.36 A"/>
    <property type="chains" value="A/C=306-648"/>
</dbReference>
<dbReference type="PDB" id="9AXC">
    <property type="method" value="EM"/>
    <property type="resolution" value="4.16 A"/>
    <property type="chains" value="A/C=306-648"/>
</dbReference>
<dbReference type="PDB" id="9AY7">
    <property type="method" value="X-ray"/>
    <property type="resolution" value="2.41 A"/>
    <property type="chains" value="A=337-615"/>
</dbReference>
<dbReference type="PDB" id="9AYA">
    <property type="method" value="X-ray"/>
    <property type="resolution" value="2.59 A"/>
    <property type="chains" value="A/C=337-615"/>
</dbReference>
<dbReference type="PDBsum" id="1C1Y"/>
<dbReference type="PDBsum" id="1FAQ"/>
<dbReference type="PDBsum" id="1FAR"/>
<dbReference type="PDBsum" id="1GUA"/>
<dbReference type="PDBsum" id="1RFA"/>
<dbReference type="PDBsum" id="3CU8"/>
<dbReference type="PDBsum" id="3IQJ"/>
<dbReference type="PDBsum" id="3IQU"/>
<dbReference type="PDBsum" id="3IQV"/>
<dbReference type="PDBsum" id="3KUC"/>
<dbReference type="PDBsum" id="3KUD"/>
<dbReference type="PDBsum" id="3NKX"/>
<dbReference type="PDBsum" id="3O8I"/>
<dbReference type="PDBsum" id="3OMV"/>
<dbReference type="PDBsum" id="4FJ3"/>
<dbReference type="PDBsum" id="4G0N"/>
<dbReference type="PDBsum" id="4G3X"/>
<dbReference type="PDBsum" id="4IEA"/>
<dbReference type="PDBsum" id="4IHL"/>
<dbReference type="PDBsum" id="6NTC"/>
<dbReference type="PDBsum" id="6NTD"/>
<dbReference type="PDBsum" id="6PTS"/>
<dbReference type="PDBsum" id="6PTW"/>
<dbReference type="PDBsum" id="6VJJ"/>
<dbReference type="PDBsum" id="6XGU"/>
<dbReference type="PDBsum" id="6XGV"/>
<dbReference type="PDBsum" id="6XHA"/>
<dbReference type="PDBsum" id="6XHB"/>
<dbReference type="PDBsum" id="6XI7"/>
<dbReference type="PDBsum" id="7JHP"/>
<dbReference type="PDBsum" id="7Z37"/>
<dbReference type="PDBsum" id="7Z38"/>
<dbReference type="PDBsum" id="8A68"/>
<dbReference type="PDBsum" id="8A6F"/>
<dbReference type="PDBsum" id="8A6H"/>
<dbReference type="PDBsum" id="8ATR"/>
<dbReference type="PDBsum" id="8ATS"/>
<dbReference type="PDBsum" id="8AV0"/>
<dbReference type="PDBsum" id="8CHF"/>
<dbReference type="PDBsum" id="8CPD"/>
<dbReference type="PDBsum" id="8EPW"/>
<dbReference type="PDBsum" id="8GAE"/>
<dbReference type="PDBsum" id="8GFT"/>
<dbReference type="PDBsum" id="8JOF"/>
<dbReference type="PDBsum" id="8JOG"/>
<dbReference type="PDBsum" id="8S42"/>
<dbReference type="PDBsum" id="8T74"/>
<dbReference type="PDBsum" id="8T75"/>
<dbReference type="PDBsum" id="8U1L"/>
<dbReference type="PDBsum" id="9AXA"/>
<dbReference type="PDBsum" id="9AXC"/>
<dbReference type="PDBsum" id="9AY7"/>
<dbReference type="PDBsum" id="9AYA"/>
<dbReference type="BMRB" id="P04049"/>
<dbReference type="EMDB" id="EMD-14472"/>
<dbReference type="EMDB" id="EMD-14473"/>
<dbReference type="EMDB" id="EMD-16660"/>
<dbReference type="EMDB" id="EMD-16779"/>
<dbReference type="EMDB" id="EMD-29895"/>
<dbReference type="EMDB" id="EMD-29949"/>
<dbReference type="EMDB" id="EMD-29957"/>
<dbReference type="EMDB" id="EMD-29973"/>
<dbReference type="EMDB" id="EMD-29976"/>
<dbReference type="EMDB" id="EMD-29984"/>
<dbReference type="EMDB" id="EMD-41816"/>
<dbReference type="EMDB" id="EMD-43931"/>
<dbReference type="EMDB" id="EMD-43932"/>
<dbReference type="SMR" id="P04049"/>
<dbReference type="BioGRID" id="111831">
    <property type="interactions" value="1861"/>
</dbReference>
<dbReference type="CORUM" id="P04049"/>
<dbReference type="DIP" id="DIP-1048N"/>
<dbReference type="FunCoup" id="P04049">
    <property type="interactions" value="4763"/>
</dbReference>
<dbReference type="IntAct" id="P04049">
    <property type="interactions" value="406"/>
</dbReference>
<dbReference type="MINT" id="P04049"/>
<dbReference type="STRING" id="9606.ENSP00000401888"/>
<dbReference type="BindingDB" id="P04049"/>
<dbReference type="ChEMBL" id="CHEMBL1906"/>
<dbReference type="DrugBank" id="DB15254">
    <property type="generic name" value="Avutometinib"/>
</dbReference>
<dbReference type="DrugBank" id="DB17568">
    <property type="generic name" value="Belvarafenib"/>
</dbReference>
<dbReference type="DrugBank" id="DB08862">
    <property type="generic name" value="Cholecystokinin"/>
</dbReference>
<dbReference type="DrugBank" id="DB08912">
    <property type="generic name" value="Dabrafenib"/>
</dbReference>
<dbReference type="DrugBank" id="DB04367">
    <property type="generic name" value="Debromohymenialdisine"/>
</dbReference>
<dbReference type="DrugBank" id="DB11718">
    <property type="generic name" value="Encorafenib"/>
</dbReference>
<dbReference type="DrugBank" id="DB12010">
    <property type="generic name" value="Fostamatinib"/>
</dbReference>
<dbReference type="DrugBank" id="DB05268">
    <property type="generic name" value="iCo-007"/>
</dbReference>
<dbReference type="DrugBank" id="DB04973">
    <property type="generic name" value="LErafAON"/>
</dbReference>
<dbReference type="DrugBank" id="DB18865">
    <property type="generic name" value="Naporafenib"/>
</dbReference>
<dbReference type="DrugBank" id="DB08896">
    <property type="generic name" value="Regorafenib"/>
</dbReference>
<dbReference type="DrugBank" id="DB12094">
    <property type="generic name" value="Semapimod"/>
</dbReference>
<dbReference type="DrugBank" id="DB00398">
    <property type="generic name" value="Sorafenib"/>
</dbReference>
<dbReference type="DrugBank" id="DB15266">
    <property type="generic name" value="Tovorafenib"/>
</dbReference>
<dbReference type="DrugBank" id="DB05190">
    <property type="generic name" value="XL281"/>
</dbReference>
<dbReference type="DrugCentral" id="P04049"/>
<dbReference type="GuidetoPHARMACOLOGY" id="2184"/>
<dbReference type="MoonDB" id="P04049">
    <property type="type" value="Predicted"/>
</dbReference>
<dbReference type="GlyCosmos" id="P04049">
    <property type="glycosylation" value="1 site, 1 glycan"/>
</dbReference>
<dbReference type="GlyGen" id="P04049">
    <property type="glycosylation" value="3 sites, 1 N-linked glycan (1 site), 1 O-linked glycan (1 site)"/>
</dbReference>
<dbReference type="iPTMnet" id="P04049"/>
<dbReference type="PhosphoSitePlus" id="P04049"/>
<dbReference type="BioMuta" id="RAF1"/>
<dbReference type="DMDM" id="125651"/>
<dbReference type="CPTAC" id="CPTAC-1335"/>
<dbReference type="CPTAC" id="CPTAC-1336"/>
<dbReference type="CPTAC" id="CPTAC-1546"/>
<dbReference type="CPTAC" id="CPTAC-1762"/>
<dbReference type="CPTAC" id="CPTAC-5778"/>
<dbReference type="CPTAC" id="CPTAC-5779"/>
<dbReference type="CPTAC" id="CPTAC-5780"/>
<dbReference type="CPTAC" id="CPTAC-5828"/>
<dbReference type="CPTAC" id="CPTAC-5829"/>
<dbReference type="CPTAC" id="non-CPTAC-5431"/>
<dbReference type="CPTAC" id="non-CPTAC-5432"/>
<dbReference type="CPTAC" id="non-CPTAC-5433"/>
<dbReference type="CPTAC" id="non-CPTAC-5569"/>
<dbReference type="CPTAC" id="non-CPTAC-5570"/>
<dbReference type="CPTAC" id="non-CPTAC-5734"/>
<dbReference type="jPOST" id="P04049"/>
<dbReference type="MassIVE" id="P04049"/>
<dbReference type="PaxDb" id="9606-ENSP00000251849"/>
<dbReference type="PeptideAtlas" id="P04049"/>
<dbReference type="ProteomicsDB" id="51637">
    <molecule id="P04049-1"/>
</dbReference>
<dbReference type="ProteomicsDB" id="51638">
    <molecule id="P04049-2"/>
</dbReference>
<dbReference type="Pumba" id="P04049"/>
<dbReference type="ABCD" id="P04049">
    <property type="antibodies" value="5 sequenced antibodies"/>
</dbReference>
<dbReference type="Antibodypedia" id="1131">
    <property type="antibodies" value="3125 antibodies from 51 providers"/>
</dbReference>
<dbReference type="CPTC" id="P04049">
    <property type="antibodies" value="8 antibodies"/>
</dbReference>
<dbReference type="DNASU" id="5894"/>
<dbReference type="Ensembl" id="ENST00000251849.9">
    <molecule id="P04049-1"/>
    <property type="protein sequence ID" value="ENSP00000251849.4"/>
    <property type="gene ID" value="ENSG00000132155.14"/>
</dbReference>
<dbReference type="Ensembl" id="ENST00000442415.7">
    <molecule id="P04049-2"/>
    <property type="protein sequence ID" value="ENSP00000401888.2"/>
    <property type="gene ID" value="ENSG00000132155.14"/>
</dbReference>
<dbReference type="Ensembl" id="ENST00000685653.1">
    <molecule id="P04049-1"/>
    <property type="protein sequence ID" value="ENSP00000509968.1"/>
    <property type="gene ID" value="ENSG00000132155.14"/>
</dbReference>
<dbReference type="Ensembl" id="ENST00000691899.1">
    <molecule id="P04049-1"/>
    <property type="protein sequence ID" value="ENSP00000508763.1"/>
    <property type="gene ID" value="ENSG00000132155.14"/>
</dbReference>
<dbReference type="GeneID" id="5894"/>
<dbReference type="KEGG" id="hsa:5894"/>
<dbReference type="MANE-Select" id="ENST00000251849.9">
    <property type="protein sequence ID" value="ENSP00000251849.4"/>
    <property type="RefSeq nucleotide sequence ID" value="NM_002880.4"/>
    <property type="RefSeq protein sequence ID" value="NP_002871.1"/>
</dbReference>
<dbReference type="UCSC" id="uc003bxf.5">
    <molecule id="P04049-1"/>
    <property type="organism name" value="human"/>
</dbReference>
<dbReference type="AGR" id="HGNC:9829"/>
<dbReference type="CTD" id="5894"/>
<dbReference type="DisGeNET" id="5894"/>
<dbReference type="GeneCards" id="RAF1"/>
<dbReference type="GeneReviews" id="RAF1"/>
<dbReference type="HGNC" id="HGNC:9829">
    <property type="gene designation" value="RAF1"/>
</dbReference>
<dbReference type="HPA" id="ENSG00000132155">
    <property type="expression patterns" value="Low tissue specificity"/>
</dbReference>
<dbReference type="MalaCards" id="RAF1"/>
<dbReference type="MIM" id="164760">
    <property type="type" value="gene"/>
</dbReference>
<dbReference type="MIM" id="611553">
    <property type="type" value="phenotype"/>
</dbReference>
<dbReference type="MIM" id="611554">
    <property type="type" value="phenotype"/>
</dbReference>
<dbReference type="MIM" id="615916">
    <property type="type" value="phenotype"/>
</dbReference>
<dbReference type="neXtProt" id="NX_P04049"/>
<dbReference type="OpenTargets" id="ENSG00000132155"/>
<dbReference type="Orphanet" id="154">
    <property type="disease" value="Familial isolated dilated cardiomyopathy"/>
</dbReference>
<dbReference type="Orphanet" id="626">
    <property type="disease" value="Large/giant congenital melanocytic nevus"/>
</dbReference>
<dbReference type="Orphanet" id="648">
    <property type="disease" value="Noonan syndrome"/>
</dbReference>
<dbReference type="Orphanet" id="500">
    <property type="disease" value="Noonan syndrome with multiple lentigines"/>
</dbReference>
<dbReference type="Orphanet" id="251615">
    <property type="disease" value="Pilomyxoid astrocytoma"/>
</dbReference>
<dbReference type="PharmGKB" id="PA34183"/>
<dbReference type="VEuPathDB" id="HostDB:ENSG00000132155"/>
<dbReference type="eggNOG" id="KOG0193">
    <property type="taxonomic scope" value="Eukaryota"/>
</dbReference>
<dbReference type="GeneTree" id="ENSGT00940000156084"/>
<dbReference type="InParanoid" id="P04049"/>
<dbReference type="OMA" id="SAYKRHA"/>
<dbReference type="OrthoDB" id="774951at2759"/>
<dbReference type="PAN-GO" id="P04049">
    <property type="GO annotations" value="5 GO annotations based on evolutionary models"/>
</dbReference>
<dbReference type="PhylomeDB" id="P04049"/>
<dbReference type="TreeFam" id="TF317006"/>
<dbReference type="BRENDA" id="2.7.10.2">
    <property type="organism ID" value="2681"/>
</dbReference>
<dbReference type="PathwayCommons" id="P04049"/>
<dbReference type="Reactome" id="R-HSA-2672351">
    <property type="pathway name" value="Stimuli-sensing channels"/>
</dbReference>
<dbReference type="Reactome" id="R-HSA-392517">
    <property type="pathway name" value="Rap1 signalling"/>
</dbReference>
<dbReference type="Reactome" id="R-HSA-430116">
    <property type="pathway name" value="GP1b-IX-V activation signalling"/>
</dbReference>
<dbReference type="Reactome" id="R-HSA-5621575">
    <property type="pathway name" value="CD209 (DC-SIGN) signaling"/>
</dbReference>
<dbReference type="Reactome" id="R-HSA-5673000">
    <property type="pathway name" value="RAF activation"/>
</dbReference>
<dbReference type="Reactome" id="R-HSA-5674135">
    <property type="pathway name" value="MAP2K and MAPK activation"/>
</dbReference>
<dbReference type="Reactome" id="R-HSA-5674499">
    <property type="pathway name" value="Negative feedback regulation of MAPK pathway"/>
</dbReference>
<dbReference type="Reactome" id="R-HSA-5675221">
    <property type="pathway name" value="Negative regulation of MAPK pathway"/>
</dbReference>
<dbReference type="Reactome" id="R-HSA-6802946">
    <property type="pathway name" value="Signaling by moderate kinase activity BRAF mutants"/>
</dbReference>
<dbReference type="Reactome" id="R-HSA-6802948">
    <property type="pathway name" value="Signaling by high-kinase activity BRAF mutants"/>
</dbReference>
<dbReference type="Reactome" id="R-HSA-6802952">
    <property type="pathway name" value="Signaling by BRAF and RAF1 fusions"/>
</dbReference>
<dbReference type="Reactome" id="R-HSA-6802955">
    <property type="pathway name" value="Paradoxical activation of RAF signaling by kinase inactive BRAF"/>
</dbReference>
<dbReference type="Reactome" id="R-HSA-9649948">
    <property type="pathway name" value="Signaling downstream of RAS mutants"/>
</dbReference>
<dbReference type="Reactome" id="R-HSA-9656223">
    <property type="pathway name" value="Signaling by RAF1 mutants"/>
</dbReference>
<dbReference type="Reactome" id="R-HSA-9726840">
    <property type="pathway name" value="SHOC2 M1731 mutant abolishes MRAS complex function"/>
</dbReference>
<dbReference type="Reactome" id="R-HSA-9726842">
    <property type="pathway name" value="Gain-of-function MRAS complexes activate RAF signaling"/>
</dbReference>
<dbReference type="Reactome" id="R-HSA-9732724">
    <property type="pathway name" value="IFNG signaling activates MAPKs"/>
</dbReference>
<dbReference type="SignaLink" id="P04049"/>
<dbReference type="SIGNOR" id="P04049"/>
<dbReference type="BioGRID-ORCS" id="5894">
    <property type="hits" value="99 hits in 1206 CRISPR screens"/>
</dbReference>
<dbReference type="CD-CODE" id="D57F7ABA">
    <property type="entry name" value="Synthetic Condensate 000274"/>
</dbReference>
<dbReference type="ChiTaRS" id="RAF1">
    <property type="organism name" value="human"/>
</dbReference>
<dbReference type="EvolutionaryTrace" id="P04049"/>
<dbReference type="GeneWiki" id="C-Raf"/>
<dbReference type="GenomeRNAi" id="5894"/>
<dbReference type="Pharos" id="P04049">
    <property type="development level" value="Tclin"/>
</dbReference>
<dbReference type="PRO" id="PR:P04049"/>
<dbReference type="Proteomes" id="UP000005640">
    <property type="component" value="Chromosome 3"/>
</dbReference>
<dbReference type="RNAct" id="P04049">
    <property type="molecule type" value="protein"/>
</dbReference>
<dbReference type="Bgee" id="ENSG00000132155">
    <property type="expression patterns" value="Expressed in gastrocnemius and 214 other cell types or tissues"/>
</dbReference>
<dbReference type="ExpressionAtlas" id="P04049">
    <property type="expression patterns" value="baseline and differential"/>
</dbReference>
<dbReference type="GO" id="GO:0005737">
    <property type="term" value="C:cytoplasm"/>
    <property type="evidence" value="ECO:0000314"/>
    <property type="project" value="MGI"/>
</dbReference>
<dbReference type="GO" id="GO:0005829">
    <property type="term" value="C:cytosol"/>
    <property type="evidence" value="ECO:0000314"/>
    <property type="project" value="HPA"/>
</dbReference>
<dbReference type="GO" id="GO:0005794">
    <property type="term" value="C:Golgi apparatus"/>
    <property type="evidence" value="ECO:0000353"/>
    <property type="project" value="MGI"/>
</dbReference>
<dbReference type="GO" id="GO:0005741">
    <property type="term" value="C:mitochondrial outer membrane"/>
    <property type="evidence" value="ECO:0000304"/>
    <property type="project" value="ProtInc"/>
</dbReference>
<dbReference type="GO" id="GO:0005739">
    <property type="term" value="C:mitochondrion"/>
    <property type="evidence" value="ECO:0000318"/>
    <property type="project" value="GO_Central"/>
</dbReference>
<dbReference type="GO" id="GO:0005634">
    <property type="term" value="C:nucleus"/>
    <property type="evidence" value="ECO:0007669"/>
    <property type="project" value="UniProtKB-SubCell"/>
</dbReference>
<dbReference type="GO" id="GO:0005886">
    <property type="term" value="C:plasma membrane"/>
    <property type="evidence" value="ECO:0000314"/>
    <property type="project" value="HPA"/>
</dbReference>
<dbReference type="GO" id="GO:0031143">
    <property type="term" value="C:pseudopodium"/>
    <property type="evidence" value="ECO:0007669"/>
    <property type="project" value="Ensembl"/>
</dbReference>
<dbReference type="GO" id="GO:0010856">
    <property type="term" value="F:adenylate cyclase activator activity"/>
    <property type="evidence" value="ECO:0000314"/>
    <property type="project" value="BHF-UCL"/>
</dbReference>
<dbReference type="GO" id="GO:0005524">
    <property type="term" value="F:ATP binding"/>
    <property type="evidence" value="ECO:0007669"/>
    <property type="project" value="UniProtKB-KW"/>
</dbReference>
<dbReference type="GO" id="GO:0019899">
    <property type="term" value="F:enzyme binding"/>
    <property type="evidence" value="ECO:0000353"/>
    <property type="project" value="UniProtKB"/>
</dbReference>
<dbReference type="GO" id="GO:0042802">
    <property type="term" value="F:identical protein binding"/>
    <property type="evidence" value="ECO:0000353"/>
    <property type="project" value="IntAct"/>
</dbReference>
<dbReference type="GO" id="GO:0004709">
    <property type="term" value="F:MAP kinase kinase kinase activity"/>
    <property type="evidence" value="ECO:0000318"/>
    <property type="project" value="GO_Central"/>
</dbReference>
<dbReference type="GO" id="GO:0004672">
    <property type="term" value="F:protein kinase activity"/>
    <property type="evidence" value="ECO:0000269"/>
    <property type="project" value="Reactome"/>
</dbReference>
<dbReference type="GO" id="GO:0106310">
    <property type="term" value="F:protein serine kinase activity"/>
    <property type="evidence" value="ECO:0007669"/>
    <property type="project" value="RHEA"/>
</dbReference>
<dbReference type="GO" id="GO:0004674">
    <property type="term" value="F:protein serine/threonine kinase activity"/>
    <property type="evidence" value="ECO:0000314"/>
    <property type="project" value="UniProtKB"/>
</dbReference>
<dbReference type="GO" id="GO:0008270">
    <property type="term" value="F:zinc ion binding"/>
    <property type="evidence" value="ECO:0007669"/>
    <property type="project" value="UniProtKB-KW"/>
</dbReference>
<dbReference type="GO" id="GO:0006915">
    <property type="term" value="P:apoptotic process"/>
    <property type="evidence" value="ECO:0000304"/>
    <property type="project" value="GO_Central"/>
</dbReference>
<dbReference type="GO" id="GO:0071550">
    <property type="term" value="P:death-inducing signaling complex assembly"/>
    <property type="evidence" value="ECO:0007669"/>
    <property type="project" value="Ensembl"/>
</dbReference>
<dbReference type="GO" id="GO:0038133">
    <property type="term" value="P:ERBB2-ERBB3 signaling pathway"/>
    <property type="evidence" value="ECO:0007669"/>
    <property type="project" value="Ensembl"/>
</dbReference>
<dbReference type="GO" id="GO:0008625">
    <property type="term" value="P:extrinsic apoptotic signaling pathway via death domain receptors"/>
    <property type="evidence" value="ECO:0007669"/>
    <property type="project" value="Ensembl"/>
</dbReference>
<dbReference type="GO" id="GO:0060324">
    <property type="term" value="P:face development"/>
    <property type="evidence" value="ECO:0007669"/>
    <property type="project" value="Ensembl"/>
</dbReference>
<dbReference type="GO" id="GO:0008286">
    <property type="term" value="P:insulin receptor signaling pathway"/>
    <property type="evidence" value="ECO:0007669"/>
    <property type="project" value="Ensembl"/>
</dbReference>
<dbReference type="GO" id="GO:0035773">
    <property type="term" value="P:insulin secretion involved in cellular response to glucose stimulus"/>
    <property type="evidence" value="ECO:0007669"/>
    <property type="project" value="Ensembl"/>
</dbReference>
<dbReference type="GO" id="GO:0048009">
    <property type="term" value="P:insulin-like growth factor receptor signaling pathway"/>
    <property type="evidence" value="ECO:0007669"/>
    <property type="project" value="Ensembl"/>
</dbReference>
<dbReference type="GO" id="GO:0045104">
    <property type="term" value="P:intermediate filament cytoskeleton organization"/>
    <property type="evidence" value="ECO:0007669"/>
    <property type="project" value="Ensembl"/>
</dbReference>
<dbReference type="GO" id="GO:0000165">
    <property type="term" value="P:MAPK cascade"/>
    <property type="evidence" value="ECO:0000318"/>
    <property type="project" value="GO_Central"/>
</dbReference>
<dbReference type="GO" id="GO:0042552">
    <property type="term" value="P:myelination"/>
    <property type="evidence" value="ECO:0007669"/>
    <property type="project" value="Ensembl"/>
</dbReference>
<dbReference type="GO" id="GO:0043066">
    <property type="term" value="P:negative regulation of apoptotic process"/>
    <property type="evidence" value="ECO:0000314"/>
    <property type="project" value="UniProtKB"/>
</dbReference>
<dbReference type="GO" id="GO:0008285">
    <property type="term" value="P:negative regulation of cell population proliferation"/>
    <property type="evidence" value="ECO:0000314"/>
    <property type="project" value="BHF-UCL"/>
</dbReference>
<dbReference type="GO" id="GO:1902042">
    <property type="term" value="P:negative regulation of extrinsic apoptotic signaling pathway via death domain receptors"/>
    <property type="evidence" value="ECO:0007669"/>
    <property type="project" value="Ensembl"/>
</dbReference>
<dbReference type="GO" id="GO:0031333">
    <property type="term" value="P:negative regulation of protein-containing complex assembly"/>
    <property type="evidence" value="ECO:0000314"/>
    <property type="project" value="UniProtKB"/>
</dbReference>
<dbReference type="GO" id="GO:0048011">
    <property type="term" value="P:neurotrophin TRK receptor signaling pathway"/>
    <property type="evidence" value="ECO:0007669"/>
    <property type="project" value="Ensembl"/>
</dbReference>
<dbReference type="GO" id="GO:0043410">
    <property type="term" value="P:positive regulation of MAPK cascade"/>
    <property type="evidence" value="ECO:0000314"/>
    <property type="project" value="GO_Central"/>
</dbReference>
<dbReference type="GO" id="GO:0033138">
    <property type="term" value="P:positive regulation of peptidyl-serine phosphorylation"/>
    <property type="evidence" value="ECO:0000314"/>
    <property type="project" value="UniProtKB"/>
</dbReference>
<dbReference type="GO" id="GO:0045944">
    <property type="term" value="P:positive regulation of transcription by RNA polymerase II"/>
    <property type="evidence" value="ECO:0007669"/>
    <property type="project" value="Ensembl"/>
</dbReference>
<dbReference type="GO" id="GO:0006468">
    <property type="term" value="P:protein phosphorylation"/>
    <property type="evidence" value="ECO:0000304"/>
    <property type="project" value="ProtInc"/>
</dbReference>
<dbReference type="GO" id="GO:0042981">
    <property type="term" value="P:regulation of apoptotic process"/>
    <property type="evidence" value="ECO:0000304"/>
    <property type="project" value="UniProtKB"/>
</dbReference>
<dbReference type="GO" id="GO:0045595">
    <property type="term" value="P:regulation of cell differentiation"/>
    <property type="evidence" value="ECO:0000304"/>
    <property type="project" value="UniProtKB"/>
</dbReference>
<dbReference type="GO" id="GO:0035023">
    <property type="term" value="P:regulation of Rho protein signal transduction"/>
    <property type="evidence" value="ECO:0000304"/>
    <property type="project" value="UniProtKB"/>
</dbReference>
<dbReference type="GO" id="GO:0035994">
    <property type="term" value="P:response to muscle stretch"/>
    <property type="evidence" value="ECO:0007669"/>
    <property type="project" value="Ensembl"/>
</dbReference>
<dbReference type="GO" id="GO:0014044">
    <property type="term" value="P:Schwann cell development"/>
    <property type="evidence" value="ECO:0007669"/>
    <property type="project" value="Ensembl"/>
</dbReference>
<dbReference type="GO" id="GO:0007165">
    <property type="term" value="P:signal transduction"/>
    <property type="evidence" value="ECO:0000304"/>
    <property type="project" value="ProtInc"/>
</dbReference>
<dbReference type="GO" id="GO:0035019">
    <property type="term" value="P:somatic stem cell population maintenance"/>
    <property type="evidence" value="ECO:0007669"/>
    <property type="project" value="Ensembl"/>
</dbReference>
<dbReference type="GO" id="GO:0048538">
    <property type="term" value="P:thymus development"/>
    <property type="evidence" value="ECO:0007669"/>
    <property type="project" value="Ensembl"/>
</dbReference>
<dbReference type="GO" id="GO:0030878">
    <property type="term" value="P:thyroid gland development"/>
    <property type="evidence" value="ECO:0007669"/>
    <property type="project" value="Ensembl"/>
</dbReference>
<dbReference type="GO" id="GO:0044342">
    <property type="term" value="P:type B pancreatic cell proliferation"/>
    <property type="evidence" value="ECO:0007669"/>
    <property type="project" value="Ensembl"/>
</dbReference>
<dbReference type="GO" id="GO:0060333">
    <property type="term" value="P:type II interferon-mediated signaling pathway"/>
    <property type="evidence" value="ECO:0000304"/>
    <property type="project" value="Reactome"/>
</dbReference>
<dbReference type="GO" id="GO:0042060">
    <property type="term" value="P:wound healing"/>
    <property type="evidence" value="ECO:0000304"/>
    <property type="project" value="UniProtKB"/>
</dbReference>
<dbReference type="CDD" id="cd20870">
    <property type="entry name" value="C1_A_C-Raf"/>
    <property type="match status" value="1"/>
</dbReference>
<dbReference type="CDD" id="cd17135">
    <property type="entry name" value="RBD_CRAF"/>
    <property type="match status" value="1"/>
</dbReference>
<dbReference type="CDD" id="cd14149">
    <property type="entry name" value="STKc_C-Raf"/>
    <property type="match status" value="1"/>
</dbReference>
<dbReference type="FunFam" id="3.10.20.90:FF:000015">
    <property type="entry name" value="B-Raf proto-oncogene serine/threonine-protein kinase"/>
    <property type="match status" value="1"/>
</dbReference>
<dbReference type="FunFam" id="3.30.200.20:FF:000024">
    <property type="entry name" value="B-Raf proto-oncogene serine/threonine-protein kinase"/>
    <property type="match status" value="1"/>
</dbReference>
<dbReference type="FunFam" id="3.30.60.20:FF:000004">
    <property type="entry name" value="B-Raf proto-oncogene serine/threonine-protein kinase"/>
    <property type="match status" value="1"/>
</dbReference>
<dbReference type="FunFam" id="1.10.510.10:FF:000036">
    <property type="entry name" value="RAF proto-oncogene serine/threonine-protein kinase"/>
    <property type="match status" value="1"/>
</dbReference>
<dbReference type="Gene3D" id="3.30.60.20">
    <property type="match status" value="1"/>
</dbReference>
<dbReference type="Gene3D" id="3.10.20.90">
    <property type="entry name" value="Phosphatidylinositol 3-kinase Catalytic Subunit, Chain A, domain 1"/>
    <property type="match status" value="1"/>
</dbReference>
<dbReference type="Gene3D" id="3.30.200.20">
    <property type="entry name" value="Phosphorylase Kinase, domain 1"/>
    <property type="match status" value="1"/>
</dbReference>
<dbReference type="Gene3D" id="1.10.510.10">
    <property type="entry name" value="Transferase(Phosphotransferase) domain 1"/>
    <property type="match status" value="1"/>
</dbReference>
<dbReference type="IDEAL" id="IID00292"/>
<dbReference type="InterPro" id="IPR046349">
    <property type="entry name" value="C1-like_sf"/>
</dbReference>
<dbReference type="InterPro" id="IPR020454">
    <property type="entry name" value="DAG/PE-bd"/>
</dbReference>
<dbReference type="InterPro" id="IPR011009">
    <property type="entry name" value="Kinase-like_dom_sf"/>
</dbReference>
<dbReference type="InterPro" id="IPR002219">
    <property type="entry name" value="PE/DAG-bd"/>
</dbReference>
<dbReference type="InterPro" id="IPR000719">
    <property type="entry name" value="Prot_kinase_dom"/>
</dbReference>
<dbReference type="InterPro" id="IPR017441">
    <property type="entry name" value="Protein_kinase_ATP_BS"/>
</dbReference>
<dbReference type="InterPro" id="IPR003116">
    <property type="entry name" value="RBD_dom"/>
</dbReference>
<dbReference type="InterPro" id="IPR008271">
    <property type="entry name" value="Ser/Thr_kinase_AS"/>
</dbReference>
<dbReference type="InterPro" id="IPR051681">
    <property type="entry name" value="Ser/Thr_Kinases-Pseudokinases"/>
</dbReference>
<dbReference type="InterPro" id="IPR029071">
    <property type="entry name" value="Ubiquitin-like_domsf"/>
</dbReference>
<dbReference type="PANTHER" id="PTHR44329:SF22">
    <property type="entry name" value="RAF PROTO-ONCOGENE SERINE_THREONINE-PROTEIN KINASE"/>
    <property type="match status" value="1"/>
</dbReference>
<dbReference type="PANTHER" id="PTHR44329">
    <property type="entry name" value="SERINE/THREONINE-PROTEIN KINASE TNNI3K-RELATED"/>
    <property type="match status" value="1"/>
</dbReference>
<dbReference type="Pfam" id="PF00130">
    <property type="entry name" value="C1_1"/>
    <property type="match status" value="1"/>
</dbReference>
<dbReference type="Pfam" id="PF00069">
    <property type="entry name" value="Pkinase"/>
    <property type="match status" value="1"/>
</dbReference>
<dbReference type="Pfam" id="PF02196">
    <property type="entry name" value="RBD"/>
    <property type="match status" value="1"/>
</dbReference>
<dbReference type="PRINTS" id="PR00008">
    <property type="entry name" value="DAGPEDOMAIN"/>
</dbReference>
<dbReference type="SMART" id="SM00109">
    <property type="entry name" value="C1"/>
    <property type="match status" value="1"/>
</dbReference>
<dbReference type="SMART" id="SM00455">
    <property type="entry name" value="RBD"/>
    <property type="match status" value="1"/>
</dbReference>
<dbReference type="SMART" id="SM00220">
    <property type="entry name" value="S_TKc"/>
    <property type="match status" value="1"/>
</dbReference>
<dbReference type="SUPFAM" id="SSF57889">
    <property type="entry name" value="Cysteine-rich domain"/>
    <property type="match status" value="1"/>
</dbReference>
<dbReference type="SUPFAM" id="SSF56112">
    <property type="entry name" value="Protein kinase-like (PK-like)"/>
    <property type="match status" value="1"/>
</dbReference>
<dbReference type="SUPFAM" id="SSF54236">
    <property type="entry name" value="Ubiquitin-like"/>
    <property type="match status" value="1"/>
</dbReference>
<dbReference type="PROSITE" id="PS00107">
    <property type="entry name" value="PROTEIN_KINASE_ATP"/>
    <property type="match status" value="1"/>
</dbReference>
<dbReference type="PROSITE" id="PS50011">
    <property type="entry name" value="PROTEIN_KINASE_DOM"/>
    <property type="match status" value="1"/>
</dbReference>
<dbReference type="PROSITE" id="PS00108">
    <property type="entry name" value="PROTEIN_KINASE_ST"/>
    <property type="match status" value="1"/>
</dbReference>
<dbReference type="PROSITE" id="PS50898">
    <property type="entry name" value="RBD"/>
    <property type="match status" value="1"/>
</dbReference>
<dbReference type="PROSITE" id="PS00479">
    <property type="entry name" value="ZF_DAG_PE_1"/>
    <property type="match status" value="1"/>
</dbReference>
<dbReference type="PROSITE" id="PS50081">
    <property type="entry name" value="ZF_DAG_PE_2"/>
    <property type="match status" value="1"/>
</dbReference>
<keyword id="KW-0002">3D-structure</keyword>
<keyword id="KW-0025">Alternative splicing</keyword>
<keyword id="KW-0067">ATP-binding</keyword>
<keyword id="KW-0122">Cardiomyopathy</keyword>
<keyword id="KW-1003">Cell membrane</keyword>
<keyword id="KW-0963">Cytoplasm</keyword>
<keyword id="KW-0209">Deafness</keyword>
<keyword id="KW-0903">Direct protein sequencing</keyword>
<keyword id="KW-0225">Disease variant</keyword>
<keyword id="KW-0418">Kinase</keyword>
<keyword id="KW-0472">Membrane</keyword>
<keyword id="KW-0479">Metal-binding</keyword>
<keyword id="KW-0488">Methylation</keyword>
<keyword id="KW-0496">Mitochondrion</keyword>
<keyword id="KW-0547">Nucleotide-binding</keyword>
<keyword id="KW-0539">Nucleus</keyword>
<keyword id="KW-0597">Phosphoprotein</keyword>
<keyword id="KW-1267">Proteomics identification</keyword>
<keyword id="KW-0656">Proto-oncogene</keyword>
<keyword id="KW-1185">Reference proteome</keyword>
<keyword id="KW-0723">Serine/threonine-protein kinase</keyword>
<keyword id="KW-0808">Transferase</keyword>
<keyword id="KW-0862">Zinc</keyword>
<keyword id="KW-0863">Zinc-finger</keyword>
<accession>P04049</accession>
<accession>B0LPH8</accession>
<accession>B2R5N3</accession>
<accession>Q15278</accession>
<accession>Q9UC20</accession>
<name>RAF1_HUMAN</name>
<gene>
    <name evidence="53" type="primary">RAF1</name>
    <name type="synonym">RAF</name>
</gene>
<reference key="1">
    <citation type="journal article" date="1986" name="Nucleic Acids Res.">
        <title>The complete coding sequence of the human raf oncogene and the corresponding structure of the c-raf-1 gene.</title>
        <authorList>
            <person name="Bonner T.I."/>
            <person name="Oppermann H."/>
            <person name="Seeburg P."/>
            <person name="Kerby S.B."/>
            <person name="Gunnell M.A."/>
            <person name="Young A.C."/>
            <person name="Rapp U.R."/>
        </authorList>
    </citation>
    <scope>NUCLEOTIDE SEQUENCE [MRNA] (ISOFORM 1)</scope>
</reference>
<reference key="2">
    <citation type="journal article" date="2004" name="Nat. Genet.">
        <title>Complete sequencing and characterization of 21,243 full-length human cDNAs.</title>
        <authorList>
            <person name="Ota T."/>
            <person name="Suzuki Y."/>
            <person name="Nishikawa T."/>
            <person name="Otsuki T."/>
            <person name="Sugiyama T."/>
            <person name="Irie R."/>
            <person name="Wakamatsu A."/>
            <person name="Hayashi K."/>
            <person name="Sato H."/>
            <person name="Nagai K."/>
            <person name="Kimura K."/>
            <person name="Makita H."/>
            <person name="Sekine M."/>
            <person name="Obayashi M."/>
            <person name="Nishi T."/>
            <person name="Shibahara T."/>
            <person name="Tanaka T."/>
            <person name="Ishii S."/>
            <person name="Yamamoto J."/>
            <person name="Saito K."/>
            <person name="Kawai Y."/>
            <person name="Isono Y."/>
            <person name="Nakamura Y."/>
            <person name="Nagahari K."/>
            <person name="Murakami K."/>
            <person name="Yasuda T."/>
            <person name="Iwayanagi T."/>
            <person name="Wagatsuma M."/>
            <person name="Shiratori A."/>
            <person name="Sudo H."/>
            <person name="Hosoiri T."/>
            <person name="Kaku Y."/>
            <person name="Kodaira H."/>
            <person name="Kondo H."/>
            <person name="Sugawara M."/>
            <person name="Takahashi M."/>
            <person name="Kanda K."/>
            <person name="Yokoi T."/>
            <person name="Furuya T."/>
            <person name="Kikkawa E."/>
            <person name="Omura Y."/>
            <person name="Abe K."/>
            <person name="Kamihara K."/>
            <person name="Katsuta N."/>
            <person name="Sato K."/>
            <person name="Tanikawa M."/>
            <person name="Yamazaki M."/>
            <person name="Ninomiya K."/>
            <person name="Ishibashi T."/>
            <person name="Yamashita H."/>
            <person name="Murakawa K."/>
            <person name="Fujimori K."/>
            <person name="Tanai H."/>
            <person name="Kimata M."/>
            <person name="Watanabe M."/>
            <person name="Hiraoka S."/>
            <person name="Chiba Y."/>
            <person name="Ishida S."/>
            <person name="Ono Y."/>
            <person name="Takiguchi S."/>
            <person name="Watanabe S."/>
            <person name="Yosida M."/>
            <person name="Hotuta T."/>
            <person name="Kusano J."/>
            <person name="Kanehori K."/>
            <person name="Takahashi-Fujii A."/>
            <person name="Hara H."/>
            <person name="Tanase T.-O."/>
            <person name="Nomura Y."/>
            <person name="Togiya S."/>
            <person name="Komai F."/>
            <person name="Hara R."/>
            <person name="Takeuchi K."/>
            <person name="Arita M."/>
            <person name="Imose N."/>
            <person name="Musashino K."/>
            <person name="Yuuki H."/>
            <person name="Oshima A."/>
            <person name="Sasaki N."/>
            <person name="Aotsuka S."/>
            <person name="Yoshikawa Y."/>
            <person name="Matsunawa H."/>
            <person name="Ichihara T."/>
            <person name="Shiohata N."/>
            <person name="Sano S."/>
            <person name="Moriya S."/>
            <person name="Momiyama H."/>
            <person name="Satoh N."/>
            <person name="Takami S."/>
            <person name="Terashima Y."/>
            <person name="Suzuki O."/>
            <person name="Nakagawa S."/>
            <person name="Senoh A."/>
            <person name="Mizoguchi H."/>
            <person name="Goto Y."/>
            <person name="Shimizu F."/>
            <person name="Wakebe H."/>
            <person name="Hishigaki H."/>
            <person name="Watanabe T."/>
            <person name="Sugiyama A."/>
            <person name="Takemoto M."/>
            <person name="Kawakami B."/>
            <person name="Yamazaki M."/>
            <person name="Watanabe K."/>
            <person name="Kumagai A."/>
            <person name="Itakura S."/>
            <person name="Fukuzumi Y."/>
            <person name="Fujimori Y."/>
            <person name="Komiyama M."/>
            <person name="Tashiro H."/>
            <person name="Tanigami A."/>
            <person name="Fujiwara T."/>
            <person name="Ono T."/>
            <person name="Yamada K."/>
            <person name="Fujii Y."/>
            <person name="Ozaki K."/>
            <person name="Hirao M."/>
            <person name="Ohmori Y."/>
            <person name="Kawabata A."/>
            <person name="Hikiji T."/>
            <person name="Kobatake N."/>
            <person name="Inagaki H."/>
            <person name="Ikema Y."/>
            <person name="Okamoto S."/>
            <person name="Okitani R."/>
            <person name="Kawakami T."/>
            <person name="Noguchi S."/>
            <person name="Itoh T."/>
            <person name="Shigeta K."/>
            <person name="Senba T."/>
            <person name="Matsumura K."/>
            <person name="Nakajima Y."/>
            <person name="Mizuno T."/>
            <person name="Morinaga M."/>
            <person name="Sasaki M."/>
            <person name="Togashi T."/>
            <person name="Oyama M."/>
            <person name="Hata H."/>
            <person name="Watanabe M."/>
            <person name="Komatsu T."/>
            <person name="Mizushima-Sugano J."/>
            <person name="Satoh T."/>
            <person name="Shirai Y."/>
            <person name="Takahashi Y."/>
            <person name="Nakagawa K."/>
            <person name="Okumura K."/>
            <person name="Nagase T."/>
            <person name="Nomura N."/>
            <person name="Kikuchi H."/>
            <person name="Masuho Y."/>
            <person name="Yamashita R."/>
            <person name="Nakai K."/>
            <person name="Yada T."/>
            <person name="Nakamura Y."/>
            <person name="Ohara O."/>
            <person name="Isogai T."/>
            <person name="Sugano S."/>
        </authorList>
    </citation>
    <scope>NUCLEOTIDE SEQUENCE [LARGE SCALE MRNA] (ISOFORM 1)</scope>
    <scope>VARIANT LEU-308</scope>
</reference>
<reference key="3">
    <citation type="submission" date="2007-12" db="EMBL/GenBank/DDBJ databases">
        <authorList>
            <consortium name="NIEHS SNPs program"/>
        </authorList>
    </citation>
    <scope>NUCLEOTIDE SEQUENCE [GENOMIC DNA]</scope>
    <scope>VARIANT LEU-308</scope>
</reference>
<reference key="4">
    <citation type="submission" date="2005-07" db="EMBL/GenBank/DDBJ databases">
        <authorList>
            <person name="Mural R.J."/>
            <person name="Istrail S."/>
            <person name="Sutton G.G."/>
            <person name="Florea L."/>
            <person name="Halpern A.L."/>
            <person name="Mobarry C.M."/>
            <person name="Lippert R."/>
            <person name="Walenz B."/>
            <person name="Shatkay H."/>
            <person name="Dew I."/>
            <person name="Miller J.R."/>
            <person name="Flanigan M.J."/>
            <person name="Edwards N.J."/>
            <person name="Bolanos R."/>
            <person name="Fasulo D."/>
            <person name="Halldorsson B.V."/>
            <person name="Hannenhalli S."/>
            <person name="Turner R."/>
            <person name="Yooseph S."/>
            <person name="Lu F."/>
            <person name="Nusskern D.R."/>
            <person name="Shue B.C."/>
            <person name="Zheng X.H."/>
            <person name="Zhong F."/>
            <person name="Delcher A.L."/>
            <person name="Huson D.H."/>
            <person name="Kravitz S.A."/>
            <person name="Mouchard L."/>
            <person name="Reinert K."/>
            <person name="Remington K.A."/>
            <person name="Clark A.G."/>
            <person name="Waterman M.S."/>
            <person name="Eichler E.E."/>
            <person name="Adams M.D."/>
            <person name="Hunkapiller M.W."/>
            <person name="Myers E.W."/>
            <person name="Venter J.C."/>
        </authorList>
    </citation>
    <scope>NUCLEOTIDE SEQUENCE [LARGE SCALE GENOMIC DNA]</scope>
</reference>
<reference key="5">
    <citation type="journal article" date="2004" name="Genome Res.">
        <title>The status, quality, and expansion of the NIH full-length cDNA project: the Mammalian Gene Collection (MGC).</title>
        <authorList>
            <consortium name="The MGC Project Team"/>
        </authorList>
    </citation>
    <scope>NUCLEOTIDE SEQUENCE [LARGE SCALE MRNA] (ISOFORM 1)</scope>
    <source>
        <tissue>Pancreas</tissue>
    </source>
</reference>
<reference key="6">
    <citation type="journal article" date="1985" name="Mol. Cell. Biol.">
        <title>Structure and biological activity of human homologs of the raf/mil oncogene.</title>
        <authorList>
            <person name="Bonner T.I."/>
            <person name="Kerby S.B."/>
            <person name="Sutrave P."/>
            <person name="Gunnell M.A."/>
            <person name="Mark G."/>
            <person name="Rapp U.R."/>
        </authorList>
    </citation>
    <scope>NUCLEOTIDE SEQUENCE [GENOMIC DNA] OF 228-648</scope>
</reference>
<reference key="7">
    <citation type="journal article" date="2011" name="Sci. Signal.">
        <title>Protein arginine methyltransferase 5 regulates ERK1/2 signal transduction amplitude and cell fate through CRAF.</title>
        <authorList>
            <person name="Andreu-Perez P."/>
            <person name="Esteve-Puig R."/>
            <person name="de Torre-Minguela C."/>
            <person name="Lopez-Fauqued M."/>
            <person name="Bech-Serra J.J."/>
            <person name="Tenbaum S."/>
            <person name="Garcia-Trevijano E.R."/>
            <person name="Canals F."/>
            <person name="Merlino G."/>
            <person name="Avila M.A."/>
            <person name="Recio J.A."/>
        </authorList>
    </citation>
    <scope>PROTEIN SEQUENCE OF 42-53; 60-65; 310-316 AND 564-572</scope>
    <scope>INTERACTION WITH PRMT5</scope>
    <scope>METHYLATION AT ARG-563</scope>
    <scope>PHOSPHORYLATION AT SER-289; SER-296; SER-301; SER-338 AND SER-621</scope>
    <scope>MUTAGENESIS OF ARG-563</scope>
</reference>
<reference key="8">
    <citation type="journal article" date="1995" name="Nature">
        <title>Phosphorylation of Raf by ceramide-activated protein kinase.</title>
        <authorList>
            <person name="Yao B."/>
            <person name="Zhang Y."/>
            <person name="Delikat S."/>
            <person name="Mathias S."/>
            <person name="Basu S."/>
            <person name="Kolesnick R."/>
        </authorList>
    </citation>
    <scope>PROTEIN SEQUENCE OF 254-278</scope>
    <scope>PHOSPHORYLATION AT THR-269</scope>
</reference>
<reference key="9">
    <citation type="journal article" date="1991" name="Oncogene">
        <title>An alternatively spliced c-mil/raf mRNA is predominantly expressed in chicken muscular tissues and conserved among vertebrate species.</title>
        <authorList>
            <person name="Dozier C."/>
            <person name="Ansieau S."/>
            <person name="Ferreira E."/>
            <person name="Coll J."/>
            <person name="Stehelin D."/>
        </authorList>
    </citation>
    <scope>PARTIAL NUCLEOTIDE SEQUENCE [GENOMIC DNA]</scope>
    <scope>ALTERNATIVE SPLICING</scope>
    <scope>TISSUE SPECIFICITY</scope>
    <source>
        <tissue>Placenta</tissue>
    </source>
</reference>
<reference key="10">
    <citation type="journal article" date="1993" name="J. Biol. Chem.">
        <title>Identification of the major phosphorylation sites of the Raf-1 kinase.</title>
        <authorList>
            <person name="Morrison D.K."/>
            <person name="Heidecker G."/>
            <person name="Rapp U.R."/>
            <person name="Copeland T.D."/>
        </authorList>
    </citation>
    <scope>PHOSPHORYLATION AT SER-43; SER-259; THR-268; SER-499 AND SER-621</scope>
</reference>
<reference key="11">
    <citation type="journal article" date="1997" name="J. Biol. Chem.">
        <title>14-3-3 is phosphorylated by casein kinase I on residue 233. Phosphorylation at this site in vivo regulates Raf/14-3-3 interaction.</title>
        <authorList>
            <person name="Dubois T."/>
            <person name="Rommel C."/>
            <person name="Howell S."/>
            <person name="Steinhussen U."/>
            <person name="Soneji Y."/>
            <person name="Morrice N."/>
            <person name="Moelling K."/>
            <person name="Aitken A."/>
        </authorList>
    </citation>
    <scope>INTERACTION WITH YWHAZ</scope>
    <scope>FUNCTION</scope>
</reference>
<reference key="12">
    <citation type="journal article" date="1998" name="Nature">
        <title>The protein kinase Pak3 positively regulates Raf-1 activity through phosphorylation of serine 338.</title>
        <authorList>
            <person name="King A.J."/>
            <person name="Sun H."/>
            <person name="Diaz B."/>
            <person name="Barnard D."/>
            <person name="Miao W."/>
            <person name="Bagrodia S."/>
            <person name="Marshall M.S."/>
        </authorList>
    </citation>
    <scope>PHOSPHORYLATION</scope>
</reference>
<reference key="13">
    <citation type="journal article" date="2000" name="Nature">
        <authorList>
            <person name="King A.J."/>
            <person name="Sun H."/>
            <person name="Diaz B."/>
            <person name="Barnard D."/>
            <person name="Miao W."/>
            <person name="Bagrodia S."/>
            <person name="Marshall M.S."/>
        </authorList>
    </citation>
    <scope>ERRATUM OF PUBMED:9823899</scope>
</reference>
<reference key="14">
    <citation type="journal article" date="1999" name="Science">
        <title>Phosphorylation and regulation of Raf by Akt (protein kinase B).</title>
        <authorList>
            <person name="Zimmermann S."/>
            <person name="Moelling K."/>
        </authorList>
    </citation>
    <scope>PHOSPHORYLATION AT SER-259 BY PKB/AKT1</scope>
    <scope>ACTIVITY REGULATION</scope>
    <scope>INTERACTION WITH PKB/AKT1</scope>
</reference>
<reference key="15">
    <citation type="journal article" date="2000" name="J. Biol. Chem.">
        <title>Raf-1-associated protein phosphatase 2A as a positive regulator of kinase activation.</title>
        <authorList>
            <person name="Abraham D."/>
            <person name="Podar K."/>
            <person name="Pacher M."/>
            <person name="Kubicek M."/>
            <person name="Welzel N."/>
            <person name="Hemmings B.A."/>
            <person name="Dilworth S.M."/>
            <person name="Mischak H."/>
            <person name="Kolch W."/>
            <person name="Baccarini M."/>
        </authorList>
    </citation>
    <scope>PHOSPHORYLATION AT SER-259 AND SER-621</scope>
    <scope>DEPHOSPHORYLATION AT SER-43; SER-259 AND SER-621</scope>
    <scope>ACTIVITY REGULATION</scope>
    <scope>INTERACTION WITH PPP2CA AND PPP2R1B</scope>
</reference>
<reference key="16">
    <citation type="journal article" date="2001" name="EMBO J.">
        <title>Positive and negative regulation of Raf kinase activity and function by phosphorylation.</title>
        <authorList>
            <person name="Chong H."/>
            <person name="Lee J."/>
            <person name="Guan K.L."/>
        </authorList>
    </citation>
    <scope>ACTIVITY REGULATION</scope>
    <scope>PHOSPHORYLATION AT THR-491 AND SER-494</scope>
</reference>
<reference key="17">
    <citation type="journal article" date="2001" name="Proc. Natl. Acad. Sci. U.S.A.">
        <title>Raf-1 promotes cell survival by antagonizing apoptosis signal-regulating kinase 1 through a MEK-ERK independent mechanism.</title>
        <authorList>
            <person name="Chen J."/>
            <person name="Fujii K."/>
            <person name="Zhang L."/>
            <person name="Roberts T."/>
            <person name="Fu H."/>
        </authorList>
    </citation>
    <scope>FUNCTION</scope>
    <scope>INTERACTION WITH MAP3K5/ASK1</scope>
</reference>
<reference key="18">
    <citation type="journal article" date="2002" name="J. Biol. Chem.">
        <title>Phosphorylation of the myosin-binding subunit of myosin phosphatase by Raf-1 and inhibition of phosphatase activity.</title>
        <authorList>
            <person name="Broustas C.G."/>
            <person name="Grammatikakis N."/>
            <person name="Eto M."/>
            <person name="Dent P."/>
            <person name="Brautigan D.L."/>
            <person name="Kasid U."/>
        </authorList>
    </citation>
    <scope>FUNCTION IN PHOSPHORYLATION OF PPP1R12A</scope>
    <scope>INTERACTION WITH PPP1R12A</scope>
</reference>
<reference key="19">
    <citation type="journal article" date="2002" name="J. Biol. Chem.">
        <title>Interaction between active Pak1 and Raf-1 is necessary for phosphorylation and activation of Raf-1.</title>
        <authorList>
            <person name="Zang M."/>
            <person name="Hayne C."/>
            <person name="Luo Z."/>
        </authorList>
    </citation>
    <scope>PHOSPHORYLATION AT SER-338 BY PAK1</scope>
    <scope>ACTIVITY REGULATION</scope>
    <scope>INTERACTION WITH PAK1</scope>
</reference>
<reference key="20">
    <citation type="journal article" date="2002" name="J. Biol. Chem.">
        <title>Dephosphorylation of Ser-259 regulates Raf-1 membrane association.</title>
        <authorList>
            <person name="Kubicek M."/>
            <person name="Pacher M."/>
            <person name="Abraham D."/>
            <person name="Podar K."/>
            <person name="Eulitz M."/>
            <person name="Baccarini M."/>
        </authorList>
    </citation>
    <scope>PHOSPHORYLATION AT SER-259</scope>
    <scope>DEPHOSPHORYLATION AT SER-259</scope>
    <scope>SUBCELLULAR LOCATION</scope>
</reference>
<reference key="21">
    <citation type="journal article" date="2002" name="Mol. Cell. Biol.">
        <title>The RAS effector RIN1 directly competes with RAF and is regulated by 14-3-3 proteins.</title>
        <authorList>
            <person name="Wang Y."/>
            <person name="Waldron R.T."/>
            <person name="Dhaka A."/>
            <person name="Patel A."/>
            <person name="Riley M.M."/>
            <person name="Rozengurt E."/>
            <person name="Colicelli J."/>
        </authorList>
    </citation>
    <scope>COMPETITION WITH RIN1</scope>
</reference>
<reference key="22">
    <citation type="journal article" date="2003" name="Nat. Cell Biol.">
        <title>Mammalian Sprouty4 suppresses Ras-independent ERK activation by binding to Raf1.</title>
        <authorList>
            <person name="Sasaki A."/>
            <person name="Taketomi T."/>
            <person name="Kato R."/>
            <person name="Saeki K."/>
            <person name="Nonami A."/>
            <person name="Sasaki M."/>
            <person name="Kuriyama M."/>
            <person name="Saito N."/>
            <person name="Shibuya M."/>
            <person name="Yoshimura A."/>
        </authorList>
    </citation>
    <scope>ACTIVITY REGULATION</scope>
    <scope>INTERACTION WITH SPRY2 AND SPRY4</scope>
</reference>
<reference key="23">
    <citation type="journal article" date="2004" name="J. Biol. Chem.">
        <title>LGI1, a putative tumor metastasis suppressor gene, controls in vitro invasiveness and expression of matrix metalloproteinases in glioma cells through the ERK1/2 pathway.</title>
        <authorList>
            <person name="Kunapuli P."/>
            <person name="Kasyapa C.S."/>
            <person name="Hawthorn L."/>
            <person name="Cowell J.K."/>
        </authorList>
    </citation>
    <scope>PHOSPHORYLATION AT SER-259</scope>
</reference>
<reference key="24">
    <citation type="journal article" date="2007" name="J. Biol. Chem.">
        <authorList>
            <person name="Kunapuli P."/>
            <person name="Kasyapa C.S."/>
            <person name="Hawthorn L."/>
            <person name="Cowell J.K."/>
        </authorList>
    </citation>
    <scope>ERRATUM OF PUBMED:15047712</scope>
</reference>
<reference key="25">
    <citation type="journal article" date="2004" name="Mol. Pharmacol.">
        <title>Raf kinase activation of adenylyl cyclases: isoform-selective regulation.</title>
        <authorList>
            <person name="Ding Q."/>
            <person name="Gros R."/>
            <person name="Gray I.D."/>
            <person name="Taussig R."/>
            <person name="Ferguson S.S."/>
            <person name="Feldman R.D."/>
        </authorList>
    </citation>
    <scope>FUNCTION IN PHOSPHORYLATION OF ADCY2; ADCY5 AND ADCY6</scope>
    <scope>INTERACTION WITH ADCY2; ADCY5 AND ADCY6</scope>
</reference>
<reference key="26">
    <citation type="journal article" date="2004" name="Science">
        <title>Role of the kinase MST2 in suppression of apoptosis by the proto-oncogene product Raf-1.</title>
        <authorList>
            <person name="O'Neill E."/>
            <person name="Rushworth L."/>
            <person name="Baccarini M."/>
            <person name="Kolch W."/>
        </authorList>
    </citation>
    <scope>INTERACTION WITH STK3/MST2</scope>
    <scope>FUNCTION</scope>
</reference>
<reference key="27">
    <citation type="journal article" date="2005" name="Arch. Biochem. Biophys.">
        <title>Raf-1 is a binding partner of DSCR1.</title>
        <authorList>
            <person name="Cho Y.J."/>
            <person name="Abe M."/>
            <person name="Kim S.Y."/>
            <person name="Sato Y."/>
        </authorList>
    </citation>
    <scope>INTERACTION WITH RCAN1/DSCR1</scope>
</reference>
<reference key="28">
    <citation type="journal article" date="2005" name="FEBS Lett.">
        <title>Second nature: biological functions of the Raf-1 'kinase'.</title>
        <authorList>
            <person name="Baccarini M."/>
        </authorList>
    </citation>
    <scope>REVIEW ON FUNCTION</scope>
</reference>
<reference key="29">
    <citation type="journal article" date="2005" name="J. Biol. Chem.">
        <title>p21-activated Kinase 1 (Pak1)-dependent phosphorylation of Raf-1 regulates its mitochondrial localization, phosphorylation of BAD, and Bcl-2 association.</title>
        <authorList>
            <person name="Jin S."/>
            <person name="Zhuo Y."/>
            <person name="Guo W."/>
            <person name="Field J."/>
        </authorList>
    </citation>
    <scope>FUNCTION IN PHOSPHORYLATION OF BAD</scope>
    <scope>PHOSPHORYLATION AT SER-338 AND SER-339 BY PAK1</scope>
    <scope>SUBCELLULAR LOCATION</scope>
    <scope>INTERACTION WITH BCL2</scope>
</reference>
<reference key="30">
    <citation type="journal article" date="2005" name="Mol. Biol. Cell">
        <title>Identification of Raf-1 S471 as a novel phosphorylation site critical for Raf-1 and B-Raf kinase activities and for MEK binding.</title>
        <authorList>
            <person name="Zhu J."/>
            <person name="Balan V."/>
            <person name="Bronisz A."/>
            <person name="Balan K."/>
            <person name="Sun H."/>
            <person name="Leicht D.T."/>
            <person name="Luo Z."/>
            <person name="Qin J."/>
            <person name="Avruch J."/>
            <person name="Tzivion G."/>
        </authorList>
    </citation>
    <scope>PHOSPHORYLATION AT SER-471</scope>
</reference>
<reference key="31">
    <citation type="journal article" date="2006" name="Mol. Cell">
        <title>A phosphatase holoenzyme comprised of Shoc2/Sur8 and the catalytic subunit of PP1 functions as an M-Ras effector to modulate Raf activity.</title>
        <authorList>
            <person name="Rodriguez-Viciana P."/>
            <person name="Oses-Prieto J."/>
            <person name="Burlingame A."/>
            <person name="Fried M."/>
            <person name="McCormick F."/>
        </authorList>
    </citation>
    <scope>IDENTIFICATION IN A COMPLEX WITH PP1CA; PPP1CB; PPP1CC; SHOC2 AND MRAS</scope>
    <scope>PHOSPHORYLATION AT SER-259</scope>
    <scope>CHARACTERIZATION OF VARIANT ALA-259</scope>
</reference>
<reference key="32">
    <citation type="journal article" date="2006" name="Mol. Cell. Biol.">
        <title>Regulation and role of Raf-1/B-Raf heterodimerization.</title>
        <authorList>
            <person name="Rushworth L.K."/>
            <person name="Hindley A.D."/>
            <person name="O'Neill E."/>
            <person name="Kolch W."/>
        </authorList>
    </citation>
    <scope>SUBUNIT</scope>
</reference>
<reference key="33">
    <citation type="journal article" date="2006" name="Nat. Cell Biol.">
        <title>Regulation of the Raf-MEK-ERK pathway by protein phosphatase 5.</title>
        <authorList>
            <person name="von Kriegsheim A."/>
            <person name="Pitt A."/>
            <person name="Grindlay G.J."/>
            <person name="Kolch W."/>
            <person name="Dhillon A.S."/>
        </authorList>
    </citation>
    <scope>FUNCTION AS KINASE</scope>
    <scope>ACTIVITY REGULATION</scope>
    <scope>PHOSPHORYLATION AT SER-259; SER-338; TYR-340; TYR-341 AND SER-621</scope>
    <scope>DEPHOSPHORYLATION AT SER-338 BY PPP5C</scope>
    <scope>MUTAGENESIS OF 338-SER-SER-339; 340-TYR-TYR-341; THR-491 AND SER-494</scope>
</reference>
<reference key="34">
    <citation type="journal article" date="2007" name="Cell Cycle">
        <title>Phosphatase and feedback regulation of Raf-1 signaling.</title>
        <authorList>
            <person name="Dhillon A.S."/>
            <person name="von Kriegsheim A."/>
            <person name="Grindlay J."/>
            <person name="Kolch W."/>
        </authorList>
    </citation>
    <scope>REVIEW ON REGULATION</scope>
</reference>
<reference key="35">
    <citation type="journal article" date="2007" name="Oncogene">
        <title>Raf 1 represses expression of the tight junction protein occludin via activation of the zinc-finger transcription factor slug.</title>
        <authorList>
            <person name="Wang Z."/>
            <person name="Wade P."/>
            <person name="Mandell K.J."/>
            <person name="Akyildiz A."/>
            <person name="Parkos C.A."/>
            <person name="Mrsny R.J."/>
            <person name="Nusrat A."/>
        </authorList>
    </citation>
    <scope>FUNCTION</scope>
</reference>
<reference key="36">
    <citation type="journal article" date="2007" name="Science">
        <title>ATM and ATR substrate analysis reveals extensive protein networks responsive to DNA damage.</title>
        <authorList>
            <person name="Matsuoka S."/>
            <person name="Ballif B.A."/>
            <person name="Smogorzewska A."/>
            <person name="McDonald E.R. III"/>
            <person name="Hurov K.E."/>
            <person name="Luo J."/>
            <person name="Bakalarski C.E."/>
            <person name="Zhao Z."/>
            <person name="Solimini N."/>
            <person name="Lerenthal Y."/>
            <person name="Shiloh Y."/>
            <person name="Gygi S.P."/>
            <person name="Elledge S.J."/>
        </authorList>
    </citation>
    <scope>PHOSPHORYLATION [LARGE SCALE ANALYSIS] AT SER-252</scope>
    <scope>IDENTIFICATION BY MASS SPECTROMETRY [LARGE SCALE ANALYSIS]</scope>
    <source>
        <tissue>Embryonic kidney</tissue>
    </source>
</reference>
<reference key="37">
    <citation type="journal article" date="2008" name="Cell. Signal.">
        <title>The RKIP (Raf-1 Kinase Inhibitor Protein) conserved pocket binds to the phosphorylated N-region of Raf-1 and inhibits the Raf-1-mediated activated phosphorylation of MEK.</title>
        <authorList>
            <person name="Rath O."/>
            <person name="Park S."/>
            <person name="Tang H.H."/>
            <person name="Banfield M.J."/>
            <person name="Brady R.L."/>
            <person name="Lee Y.C."/>
            <person name="Dignam J.D."/>
            <person name="Sedivy J.M."/>
            <person name="Kolch W."/>
            <person name="Yeung K.C."/>
        </authorList>
    </citation>
    <scope>ACTIVITY REGULATION</scope>
    <scope>INTERACTION WITH PEBP1/RKIP</scope>
</reference>
<reference key="38">
    <citation type="journal article" date="2008" name="J. Cell. Biochem.">
        <title>p21 activated kinase 5 activates Raf-1 and targets it to mitochondria.</title>
        <authorList>
            <person name="Wu X."/>
            <person name="Carr H.S."/>
            <person name="Dan I."/>
            <person name="Ruvolo P.P."/>
            <person name="Frost J.A."/>
        </authorList>
    </citation>
    <scope>PHOSPHORYLATION AT SER-338 BY PAK5</scope>
</reference>
<reference key="39">
    <citation type="journal article" date="2008" name="J. Proteome Res.">
        <title>Combining protein-based IMAC, peptide-based IMAC, and MudPIT for efficient phosphoproteomic analysis.</title>
        <authorList>
            <person name="Cantin G.T."/>
            <person name="Yi W."/>
            <person name="Lu B."/>
            <person name="Park S.K."/>
            <person name="Xu T."/>
            <person name="Lee J.-D."/>
            <person name="Yates J.R. III"/>
        </authorList>
    </citation>
    <scope>IDENTIFICATION BY MASS SPECTROMETRY [LARGE SCALE ANALYSIS]</scope>
    <source>
        <tissue>Cervix carcinoma</tissue>
    </source>
</reference>
<reference key="40">
    <citation type="journal article" date="2008" name="Mol. Cell">
        <title>Kinase-selective enrichment enables quantitative phosphoproteomics of the kinome across the cell cycle.</title>
        <authorList>
            <person name="Daub H."/>
            <person name="Olsen J.V."/>
            <person name="Bairlein M."/>
            <person name="Gnad F."/>
            <person name="Oppermann F.S."/>
            <person name="Korner R."/>
            <person name="Greff Z."/>
            <person name="Keri G."/>
            <person name="Stemmann O."/>
            <person name="Mann M."/>
        </authorList>
    </citation>
    <scope>IDENTIFICATION BY MASS SPECTROMETRY [LARGE SCALE ANALYSIS]</scope>
    <source>
        <tissue>Cervix carcinoma</tissue>
    </source>
</reference>
<reference key="41">
    <citation type="journal article" date="2008" name="Proc. Natl. Acad. Sci. U.S.A.">
        <title>A quantitative atlas of mitotic phosphorylation.</title>
        <authorList>
            <person name="Dephoure N."/>
            <person name="Zhou C."/>
            <person name="Villen J."/>
            <person name="Beausoleil S.A."/>
            <person name="Bakalarski C.E."/>
            <person name="Elledge S.J."/>
            <person name="Gygi S.P."/>
        </authorList>
    </citation>
    <scope>PHOSPHORYLATION [LARGE SCALE ANALYSIS] AT SER-642</scope>
    <scope>IDENTIFICATION BY MASS SPECTROMETRY [LARGE SCALE ANALYSIS]</scope>
    <source>
        <tissue>Cervix carcinoma</tissue>
    </source>
</reference>
<reference key="42">
    <citation type="journal article" date="2009" name="Exp. Cell Res.">
        <title>Retinoic acid induces nuclear accumulation of Raf1 during differentiation of HL-60 cells.</title>
        <authorList>
            <person name="Smith J."/>
            <person name="Bunaciu R.P."/>
            <person name="Reiterer G."/>
            <person name="Coder D."/>
            <person name="George T."/>
            <person name="Asaly M."/>
            <person name="Yen A."/>
        </authorList>
    </citation>
    <scope>SUBCELLULAR LOCATION</scope>
</reference>
<reference key="43">
    <citation type="journal article" date="2009" name="J. Biol. Chem.">
        <title>Diacylglycerol kinase eta augments C-Raf activity and B-Raf/C-Raf heterodimerization.</title>
        <authorList>
            <person name="Yasuda S."/>
            <person name="Kai M."/>
            <person name="Imai S."/>
            <person name="Takeishi K."/>
            <person name="Taketomi A."/>
            <person name="Toyota M."/>
            <person name="Kanoh H."/>
            <person name="Sakane F."/>
        </authorList>
    </citation>
    <scope>ACTIVITY REGULATION</scope>
    <scope>SUBUNIT</scope>
    <scope>SUBCELLULAR LOCATION</scope>
    <scope>INTERACTION WITH DGKH</scope>
</reference>
<reference key="44">
    <citation type="journal article" date="2009" name="Sci. Signal.">
        <title>Quantitative phosphoproteomic analysis of T cell receptor signaling reveals system-wide modulation of protein-protein interactions.</title>
        <authorList>
            <person name="Mayya V."/>
            <person name="Lundgren D.H."/>
            <person name="Hwang S.-I."/>
            <person name="Rezaul K."/>
            <person name="Wu L."/>
            <person name="Eng J.K."/>
            <person name="Rodionov V."/>
            <person name="Han D.K."/>
        </authorList>
    </citation>
    <scope>PHOSPHORYLATION [LARGE SCALE ANALYSIS] AT SER-289 AND SER-301</scope>
    <scope>IDENTIFICATION BY MASS SPECTROMETRY [LARGE SCALE ANALYSIS]</scope>
    <source>
        <tissue>Leukemic T-cell</tissue>
    </source>
</reference>
<reference key="45">
    <citation type="journal article" date="2010" name="Biochem. Biophys. Res. Commun.">
        <title>RAF protein-serine/threonine kinases: structure and regulation.</title>
        <authorList>
            <person name="Roskoski R. Jr."/>
        </authorList>
    </citation>
    <scope>REVIEW</scope>
</reference>
<reference key="46">
    <citation type="journal article" date="2010" name="Sci. Signal.">
        <title>Quantitative phosphoproteomics reveals widespread full phosphorylation site occupancy during mitosis.</title>
        <authorList>
            <person name="Olsen J.V."/>
            <person name="Vermeulen M."/>
            <person name="Santamaria A."/>
            <person name="Kumar C."/>
            <person name="Miller M.L."/>
            <person name="Jensen L.J."/>
            <person name="Gnad F."/>
            <person name="Cox J."/>
            <person name="Jensen T.S."/>
            <person name="Nigg E.A."/>
            <person name="Brunak S."/>
            <person name="Mann M."/>
        </authorList>
    </citation>
    <scope>IDENTIFICATION BY MASS SPECTROMETRY [LARGE SCALE ANALYSIS]</scope>
    <source>
        <tissue>Cervix carcinoma</tissue>
    </source>
</reference>
<reference key="47">
    <citation type="journal article" date="2011" name="BMC Syst. Biol.">
        <title>Initial characterization of the human central proteome.</title>
        <authorList>
            <person name="Burkard T.R."/>
            <person name="Planyavsky M."/>
            <person name="Kaupe I."/>
            <person name="Breitwieser F.P."/>
            <person name="Buerckstuemmer T."/>
            <person name="Bennett K.L."/>
            <person name="Superti-Furga G."/>
            <person name="Colinge J."/>
        </authorList>
    </citation>
    <scope>IDENTIFICATION BY MASS SPECTROMETRY [LARGE SCALE ANALYSIS]</scope>
</reference>
<reference key="48">
    <citation type="journal article" date="2011" name="Genes Cancer">
        <title>Raf family kinases: old dogs have learned new tricks.</title>
        <authorList>
            <person name="Matallanas D."/>
            <person name="Birtwistle M."/>
            <person name="Romano D."/>
            <person name="Zebisch A."/>
            <person name="Rauch J."/>
            <person name="von Kriegsheim A."/>
            <person name="Kolch W."/>
        </authorList>
    </citation>
    <scope>REVIEW</scope>
</reference>
<reference key="49">
    <citation type="journal article" date="2011" name="Mol. Cell. Biol.">
        <title>Nek10 mediates G2/M cell cycle arrest and MEK autoactivation in response to UV irradiation.</title>
        <authorList>
            <person name="Moniz L.S."/>
            <person name="Stambolic V."/>
        </authorList>
    </citation>
    <scope>MUTAGENESIS OF LYS-375</scope>
    <scope>INTERACTION WITH NEK10 AND MAP2K1</scope>
</reference>
<reference key="50">
    <citation type="journal article" date="2011" name="Sci. Signal.">
        <title>System-wide temporal characterization of the proteome and phosphoproteome of human embryonic stem cell differentiation.</title>
        <authorList>
            <person name="Rigbolt K.T."/>
            <person name="Prokhorova T.A."/>
            <person name="Akimov V."/>
            <person name="Henningsen J."/>
            <person name="Johansen P.T."/>
            <person name="Kratchmarova I."/>
            <person name="Kassem M."/>
            <person name="Mann M."/>
            <person name="Olsen J.V."/>
            <person name="Blagoev B."/>
        </authorList>
    </citation>
    <scope>IDENTIFICATION BY MASS SPECTROMETRY [LARGE SCALE ANALYSIS]</scope>
</reference>
<reference key="51">
    <citation type="journal article" date="2012" name="J. Clin. Invest.">
        <title>FAM83B mediates EGFR- and RAS-driven oncogenic transformation.</title>
        <authorList>
            <person name="Cipriano R."/>
            <person name="Graham J."/>
            <person name="Miskimen K.L."/>
            <person name="Bryson B.L."/>
            <person name="Bruntz R.C."/>
            <person name="Scott S.A."/>
            <person name="Brown H.A."/>
            <person name="Stark G.R."/>
            <person name="Jackson M.W."/>
        </authorList>
    </citation>
    <scope>INTERACTION WITH FAM83B</scope>
</reference>
<reference key="52">
    <citation type="journal article" date="2012" name="Proc. Natl. Acad. Sci. U.S.A.">
        <title>Structural basis for the allosteric inhibitory mechanism of human kidney-type glutaminase (KGA) and its regulation by Raf-Mek-Erk signaling in cancer cell metabolism.</title>
        <authorList>
            <person name="Thangavelu K."/>
            <person name="Pan C.Q."/>
            <person name="Karlberg T."/>
            <person name="Balaji G."/>
            <person name="Uttamchandani M."/>
            <person name="Suresh V."/>
            <person name="Schuler H."/>
            <person name="Low B.C."/>
            <person name="Sivaraman J."/>
        </authorList>
    </citation>
    <scope>INTERACTION WITH GLS</scope>
</reference>
<reference key="53">
    <citation type="journal article" date="2013" name="Blood">
        <title>MASL1 induces erythroid differentiation in human erythropoietin-dependent CD34+ cells through the Raf/MEK/ERK pathway.</title>
        <authorList>
            <person name="Kumkhaek C."/>
            <person name="Aerbajinai W."/>
            <person name="Liu W."/>
            <person name="Zhu J."/>
            <person name="Uchida N."/>
            <person name="Kurlander R."/>
            <person name="Hsieh M.M."/>
            <person name="Tisdale J.F."/>
            <person name="Rodgers G.P."/>
        </authorList>
    </citation>
    <scope>INTERACTION WITH MFHAS1</scope>
</reference>
<reference key="54">
    <citation type="journal article" date="2013" name="J. Proteome Res.">
        <title>Toward a comprehensive characterization of a human cancer cell phosphoproteome.</title>
        <authorList>
            <person name="Zhou H."/>
            <person name="Di Palma S."/>
            <person name="Preisinger C."/>
            <person name="Peng M."/>
            <person name="Polat A.N."/>
            <person name="Heck A.J."/>
            <person name="Mohammed S."/>
        </authorList>
    </citation>
    <scope>PHOSPHORYLATION [LARGE SCALE ANALYSIS] AT SER-296; SER-301 AND SER-642</scope>
    <scope>IDENTIFICATION BY MASS SPECTROMETRY [LARGE SCALE ANALYSIS]</scope>
    <source>
        <tissue>Cervix carcinoma</tissue>
        <tissue>Erythroleukemia</tissue>
    </source>
</reference>
<reference key="55">
    <citation type="journal article" date="2013" name="Proc. Natl. Acad. Sci. U.S.A.">
        <title>Phosphodiesterase-8A binds to and regulates Raf-1 kinase.</title>
        <authorList>
            <person name="Brown K.M."/>
            <person name="Day J.P."/>
            <person name="Huston E."/>
            <person name="Zimmermann B."/>
            <person name="Hampel K."/>
            <person name="Christian F."/>
            <person name="Romano D."/>
            <person name="Terhzaz S."/>
            <person name="Lee L.C."/>
            <person name="Willis M.J."/>
            <person name="Morton D.B."/>
            <person name="Beavo J.A."/>
            <person name="Shimizu-Albergine M."/>
            <person name="Davies S.A."/>
            <person name="Kolch W."/>
            <person name="Houslay M.D."/>
            <person name="Baillie G.S."/>
        </authorList>
    </citation>
    <scope>INTERACTION WITH PDE8A</scope>
</reference>
<reference key="56">
    <citation type="journal article" date="2014" name="J. Proteomics">
        <title>An enzyme assisted RP-RPLC approach for in-depth analysis of human liver phosphoproteome.</title>
        <authorList>
            <person name="Bian Y."/>
            <person name="Song C."/>
            <person name="Cheng K."/>
            <person name="Dong M."/>
            <person name="Wang F."/>
            <person name="Huang J."/>
            <person name="Sun D."/>
            <person name="Wang L."/>
            <person name="Ye M."/>
            <person name="Zou H."/>
        </authorList>
    </citation>
    <scope>IDENTIFICATION BY MASS SPECTROMETRY [LARGE SCALE ANALYSIS]</scope>
    <source>
        <tissue>Liver</tissue>
    </source>
</reference>
<reference key="57">
    <citation type="journal article" date="2017" name="EMBO J.">
        <title>Tumor suppressor Tsc1 is a new Hsp90 co-chaperone that facilitates folding of kinase and non-kinase clients.</title>
        <authorList>
            <person name="Woodford M.R."/>
            <person name="Sager R.A."/>
            <person name="Marris E."/>
            <person name="Dunn D.M."/>
            <person name="Blanden A.R."/>
            <person name="Murphy R.L."/>
            <person name="Rensing N."/>
            <person name="Shapiro O."/>
            <person name="Panaretou B."/>
            <person name="Prodromou C."/>
            <person name="Loh S.N."/>
            <person name="Gutmann D.H."/>
            <person name="Bourboulia D."/>
            <person name="Bratslavsky G."/>
            <person name="Wong M."/>
            <person name="Mollapour M."/>
        </authorList>
    </citation>
    <scope>IDENTIFICATION IN A COMPLEX WITH HSP90; HSP70; CDC37; PPP5C; TSC1; TSC2; AKT; CDK4 AND NR3C1</scope>
</reference>
<reference key="58">
    <citation type="journal article" date="2019" name="Hum. Genet.">
        <title>Delineation of LZTR1 mutation-positive patients with Noonan syndrome and identification of LZTR1 binding to RAF1-PPP1CB complexes.</title>
        <authorList>
            <person name="Umeki I."/>
            <person name="Niihori T."/>
            <person name="Abe T."/>
            <person name="Kanno S.I."/>
            <person name="Okamoto N."/>
            <person name="Mizuno S."/>
            <person name="Kurosawa K."/>
            <person name="Nagasaki K."/>
            <person name="Yoshida M."/>
            <person name="Ohashi H."/>
            <person name="Inoue S.I."/>
            <person name="Matsubara Y."/>
            <person name="Fujiwara I."/>
            <person name="Kure S."/>
            <person name="Aoki Y."/>
        </authorList>
    </citation>
    <scope>INTERACTION WITH LZTR1</scope>
</reference>
<reference key="59">
    <citation type="journal article" date="2019" name="Front. Physiol.">
        <title>A YWHAZ variant associated with cardiofaciocutaneous syndrome activates the RAF-ERK pathway.</title>
        <authorList>
            <person name="Popov I.K."/>
            <person name="Hiatt S.M."/>
            <person name="Whalen S."/>
            <person name="Keren B."/>
            <person name="Ruivenkamp C."/>
            <person name="van Haeringen A."/>
            <person name="Chen M.J."/>
            <person name="Cooper G.M."/>
            <person name="Korf B.R."/>
            <person name="Chang C."/>
        </authorList>
    </citation>
    <scope>INTERACTION WITH YWHAZ</scope>
</reference>
<reference key="60">
    <citation type="journal article" date="2022" name="Nature">
        <title>Structural basis for SHOC2 modulation of RAS signalling.</title>
        <authorList>
            <person name="Liau N.P.D."/>
            <person name="Johnson M.C."/>
            <person name="Izadi S."/>
            <person name="Gerosa L."/>
            <person name="Hammel M."/>
            <person name="Bruning J.M."/>
            <person name="Wendorff T.J."/>
            <person name="Phung W."/>
            <person name="Hymowitz S.G."/>
            <person name="Sudhamsu J."/>
        </authorList>
    </citation>
    <scope>DEPHOSPHORYLATION AT SER-259 BY SMP COMPLEX</scope>
</reference>
<reference key="61">
    <citation type="journal article" date="2022" name="Nature">
        <title>Structure-function analysis of the SHOC2-MRAS-PP1c holophosphatase complex.</title>
        <authorList>
            <person name="Kwon J.J."/>
            <person name="Hajian B."/>
            <person name="Bian Y."/>
            <person name="Young L.C."/>
            <person name="Amor A.J."/>
            <person name="Fuller J.R."/>
            <person name="Fraley C.V."/>
            <person name="Sykes A.M."/>
            <person name="So J."/>
            <person name="Pan J."/>
            <person name="Baker L."/>
            <person name="Lee S.J."/>
            <person name="Wheeler D.B."/>
            <person name="Mayhew D.L."/>
            <person name="Persky N.S."/>
            <person name="Yang X."/>
            <person name="Root D.E."/>
            <person name="Barsotti A.M."/>
            <person name="Stamford A.W."/>
            <person name="Perry C.K."/>
            <person name="Burgin A."/>
            <person name="McCormick F."/>
            <person name="Lemke C.T."/>
            <person name="Hahn W.C."/>
            <person name="Aguirre A.J."/>
        </authorList>
    </citation>
    <scope>DEPHOSPHORYLATION AT SER-259 BY SMP COMPLEX</scope>
</reference>
<reference key="62">
    <citation type="journal article" date="2022" name="Nature">
        <title>Structure of the MRAS-SHOC2-PP1C phosphatase complex.</title>
        <authorList>
            <person name="Hauseman Z.J."/>
            <person name="Fodor M."/>
            <person name="Dhembi A."/>
            <person name="Viscomi J."/>
            <person name="Egli D."/>
            <person name="Bleu M."/>
            <person name="Katz S."/>
            <person name="Park E."/>
            <person name="Jang D.M."/>
            <person name="Porter K.A."/>
            <person name="Meili F."/>
            <person name="Guo H."/>
            <person name="Kerr G."/>
            <person name="Molle S."/>
            <person name="Velez-Vega C."/>
            <person name="Beyer K.S."/>
            <person name="Galli G.G."/>
            <person name="Maira S.M."/>
            <person name="Stams T."/>
            <person name="Clark K."/>
            <person name="Eck M.J."/>
            <person name="Tordella L."/>
            <person name="Thoma C.R."/>
            <person name="King D.A."/>
        </authorList>
    </citation>
    <scope>DEPHOSPHORYLATION AT SER-259 BY SMP COMPLEX</scope>
</reference>
<reference key="63">
    <citation type="journal article" date="1995" name="Nature">
        <title>The 2.2 A crystal structure of the Ras-binding domain of the serine/threonine kinase c-Raf1 in complex with Rap1A and a GTP analogue.</title>
        <authorList>
            <person name="Nassar N."/>
            <person name="Horn G."/>
            <person name="Herrmann C."/>
            <person name="Scherer A."/>
            <person name="McCormick F."/>
            <person name="Wittinghofer A."/>
        </authorList>
    </citation>
    <scope>X-RAY CRYSTALLOGRAPHY (2.2 ANGSTROMS) OF 51-131</scope>
</reference>
<reference key="64">
    <citation type="journal article" date="1996" name="Nat. Struct. Biol.">
        <title>Ras/Rap effector specificity determined by charge reversal.</title>
        <authorList>
            <person name="Nassar N."/>
            <person name="Horn G."/>
            <person name="Herrmann C."/>
            <person name="Block C."/>
            <person name="Janknecht R."/>
            <person name="Wittinghofer A."/>
        </authorList>
    </citation>
    <scope>X-RAY CRYSTALLOGRAPHY (2.0 ANGSTROMS) OF 56-131</scope>
</reference>
<reference key="65">
    <citation type="journal article" date="1995" name="Biochemistry">
        <title>Solution structure of the Ras-binding domain of c-Raf-1 and identification of its Ras interaction surface.</title>
        <authorList>
            <person name="Emerson S.D."/>
            <person name="Madison V.S."/>
            <person name="Palermo R.E."/>
            <person name="Waugh D.S."/>
            <person name="Scheffler J.E."/>
            <person name="Tsao K.L."/>
            <person name="Kiefer S.E."/>
            <person name="Liu S.P."/>
            <person name="Fry D.C."/>
        </authorList>
    </citation>
    <scope>STRUCTURE BY NMR OF 55-132</scope>
</reference>
<reference key="66">
    <citation type="journal article" date="1996" name="Proc. Natl. Acad. Sci. U.S.A.">
        <title>The solution structure of the Raf-1 cysteine-rich domain: a novel ras and phospholipid binding site.</title>
        <authorList>
            <person name="Mott H.R."/>
            <person name="Carpenter J.W."/>
            <person name="Zhong S."/>
            <person name="Ghosh S."/>
            <person name="Bell R.M."/>
            <person name="Campbell S.L."/>
        </authorList>
    </citation>
    <scope>STRUCTURE BY NMR OF 136-187</scope>
</reference>
<reference key="67">
    <citation type="journal article" date="2007" name="Nat. Genet.">
        <title>Gain-of-function RAF1 mutations cause Noonan and LEOPARD syndromes with hypertrophic cardiomyopathy.</title>
        <authorList>
            <person name="Pandit B."/>
            <person name="Sarkozy A."/>
            <person name="Pennacchio L.A."/>
            <person name="Carta C."/>
            <person name="Oishi K."/>
            <person name="Martinelli S."/>
            <person name="Pogna E.A."/>
            <person name="Schackwitz W."/>
            <person name="Ustaszewska A."/>
            <person name="Landstrom A."/>
            <person name="Bos J.M."/>
            <person name="Ommen S.R."/>
            <person name="Esposito G."/>
            <person name="Lepri F."/>
            <person name="Faul C."/>
            <person name="Mundel P."/>
            <person name="Lopez Siguero J.P."/>
            <person name="Tenconi R."/>
            <person name="Selicorni A."/>
            <person name="Rossi C."/>
            <person name="Mazzanti L."/>
            <person name="Torrente I."/>
            <person name="Marino B."/>
            <person name="Digilio M.C."/>
            <person name="Zampino G."/>
            <person name="Ackerman M.J."/>
            <person name="Dallapiccola B."/>
            <person name="Tartaglia M."/>
            <person name="Gelb B.D."/>
        </authorList>
    </citation>
    <scope>VARIANTS NS5 SER-256; LEU-257; PHE-259; ARG-260; LEU-261; SER-261; ASN-486; GLY-486; ILE-491; ARG-491 AND THR-612</scope>
    <scope>VARIANT HYPERTROPHIC CARDIOMYOPATHY ILE-260</scope>
    <scope>VARIANTS LPRD2 LEU-257 AND VAL-613</scope>
    <scope>CHARACTERIZATION OF VARIANTS NS5 SER-261; ASN-486 AND ILE-491</scope>
    <scope>CHARACTERIZATION OF VARIANT LPRD2 VAL-613</scope>
    <scope>CATALYTIC ACTIVITY</scope>
</reference>
<reference key="68">
    <citation type="journal article" date="2007" name="Nat. Genet.">
        <title>Germline gain-of-function mutations in RAF1 cause Noonan syndrome.</title>
        <authorList>
            <person name="Razzaque M.A."/>
            <person name="Nishizawa T."/>
            <person name="Komoike Y."/>
            <person name="Yagi H."/>
            <person name="Furutani M."/>
            <person name="Amo R."/>
            <person name="Kamisago M."/>
            <person name="Momma K."/>
            <person name="Katayama H."/>
            <person name="Nakagawa M."/>
            <person name="Fujiwara Y."/>
            <person name="Matsushima M."/>
            <person name="Mizuno K."/>
            <person name="Tokuyama M."/>
            <person name="Hirota H."/>
            <person name="Muneuchi J."/>
            <person name="Higashinakagawa T."/>
            <person name="Matsuoka R."/>
        </authorList>
    </citation>
    <scope>VARIANTS NS5 LEU-257; ALA-261; SER-261; ALA-263 AND VAL-613</scope>
    <scope>CHARACTERIZATION OF VARIANTS NS5 LEU-257; ALA-261; SER-261; ALA-263 AND VAL-613</scope>
</reference>
<reference key="69">
    <citation type="journal article" date="2007" name="Nature">
        <title>Patterns of somatic mutation in human cancer genomes.</title>
        <authorList>
            <person name="Greenman C."/>
            <person name="Stephens P."/>
            <person name="Smith R."/>
            <person name="Dalgliesh G.L."/>
            <person name="Hunter C."/>
            <person name="Bignell G."/>
            <person name="Davies H."/>
            <person name="Teague J."/>
            <person name="Butler A."/>
            <person name="Stevens C."/>
            <person name="Edkins S."/>
            <person name="O'Meara S."/>
            <person name="Vastrik I."/>
            <person name="Schmidt E.E."/>
            <person name="Avis T."/>
            <person name="Barthorpe S."/>
            <person name="Bhamra G."/>
            <person name="Buck G."/>
            <person name="Choudhury B."/>
            <person name="Clements J."/>
            <person name="Cole J."/>
            <person name="Dicks E."/>
            <person name="Forbes S."/>
            <person name="Gray K."/>
            <person name="Halliday K."/>
            <person name="Harrison R."/>
            <person name="Hills K."/>
            <person name="Hinton J."/>
            <person name="Jenkinson A."/>
            <person name="Jones D."/>
            <person name="Menzies A."/>
            <person name="Mironenko T."/>
            <person name="Perry J."/>
            <person name="Raine K."/>
            <person name="Richardson D."/>
            <person name="Shepherd R."/>
            <person name="Small A."/>
            <person name="Tofts C."/>
            <person name="Varian J."/>
            <person name="Webb T."/>
            <person name="West S."/>
            <person name="Widaa S."/>
            <person name="Yates A."/>
            <person name="Cahill D.P."/>
            <person name="Louis D.N."/>
            <person name="Goldstraw P."/>
            <person name="Nicholson A.G."/>
            <person name="Brasseur F."/>
            <person name="Looijenga L."/>
            <person name="Weber B.L."/>
            <person name="Chiew Y.-E."/>
            <person name="DeFazio A."/>
            <person name="Greaves M.F."/>
            <person name="Green A.R."/>
            <person name="Campbell P."/>
            <person name="Birney E."/>
            <person name="Easton D.F."/>
            <person name="Chenevix-Trench G."/>
            <person name="Tan M.-H."/>
            <person name="Khoo S.K."/>
            <person name="Teh B.T."/>
            <person name="Yuen S.T."/>
            <person name="Leung S.Y."/>
            <person name="Wooster R."/>
            <person name="Futreal P.A."/>
            <person name="Stratton M.R."/>
        </authorList>
    </citation>
    <scope>VARIANTS [LARGE SCALE ANALYSIS] ALA-259 AND HIS-335</scope>
</reference>
<reference key="70">
    <citation type="journal article" date="2010" name="Am. J. Med. Genet. A">
        <title>Noonan syndrome associated with both a new Jnk-activating familial SOS1 and a de novo RAF1 mutations.</title>
        <authorList>
            <person name="Longoni M."/>
            <person name="Moncini S."/>
            <person name="Cisternino M."/>
            <person name="Morella I.M."/>
            <person name="Ferraiuolo S."/>
            <person name="Russo S."/>
            <person name="Mannarino S."/>
            <person name="Brazzelli V."/>
            <person name="Coi P."/>
            <person name="Zippel R."/>
            <person name="Venturin M."/>
            <person name="Riva P."/>
        </authorList>
    </citation>
    <scope>VARIANT NS5 SER-261</scope>
</reference>
<reference key="71">
    <citation type="journal article" date="2014" name="Nat. Genet.">
        <title>RAF1 mutations in childhood-onset dilated cardiomyopathy.</title>
        <authorList>
            <person name="Dhandapany P.S."/>
            <person name="Razzaque M.A."/>
            <person name="Muthusami U."/>
            <person name="Kunnoth S."/>
            <person name="Edwards J.J."/>
            <person name="Mulero-Navarro S."/>
            <person name="Riess I."/>
            <person name="Pardo S."/>
            <person name="Sheng J."/>
            <person name="Rani D.S."/>
            <person name="Rani B."/>
            <person name="Govindaraj P."/>
            <person name="Flex E."/>
            <person name="Yokota T."/>
            <person name="Furutani M."/>
            <person name="Nishizawa T."/>
            <person name="Nakanishi T."/>
            <person name="Robbins J."/>
            <person name="Limongelli G."/>
            <person name="Hajjar R.J."/>
            <person name="Lebeche D."/>
            <person name="Bahl A."/>
            <person name="Khullar M."/>
            <person name="Rathinavel A."/>
            <person name="Sadler K.C."/>
            <person name="Tartaglia M."/>
            <person name="Matsuoka R."/>
            <person name="Thangaraj K."/>
            <person name="Gelb B.D."/>
        </authorList>
    </citation>
    <scope>INVOLVEMENT IN CMD1NN</scope>
    <scope>VARIANTS CMD1NN THR-237; ALA-310; ALA-332; PRO-603; ARG-626 AND MET-641</scope>
    <scope>CHARACTERIZATION OF VARIANTS CMD1NN THR-237; ALA-310; ALA-332; PRO-603; ARG-626 AND MET-641</scope>
</reference>
<organism>
    <name type="scientific">Homo sapiens</name>
    <name type="common">Human</name>
    <dbReference type="NCBI Taxonomy" id="9606"/>
    <lineage>
        <taxon>Eukaryota</taxon>
        <taxon>Metazoa</taxon>
        <taxon>Chordata</taxon>
        <taxon>Craniata</taxon>
        <taxon>Vertebrata</taxon>
        <taxon>Euteleostomi</taxon>
        <taxon>Mammalia</taxon>
        <taxon>Eutheria</taxon>
        <taxon>Euarchontoglires</taxon>
        <taxon>Primates</taxon>
        <taxon>Haplorrhini</taxon>
        <taxon>Catarrhini</taxon>
        <taxon>Hominidae</taxon>
        <taxon>Homo</taxon>
    </lineage>
</organism>
<feature type="chain" id="PRO_0000086596" description="RAF proto-oncogene serine/threonine-protein kinase">
    <location>
        <begin position="1"/>
        <end position="648"/>
    </location>
</feature>
<feature type="domain" description="RBD" evidence="5">
    <location>
        <begin position="56"/>
        <end position="131"/>
    </location>
</feature>
<feature type="domain" description="Protein kinase" evidence="3">
    <location>
        <begin position="349"/>
        <end position="609"/>
    </location>
</feature>
<feature type="zinc finger region" description="Phorbol-ester/DAG-type" evidence="4">
    <location>
        <begin position="138"/>
        <end position="184"/>
    </location>
</feature>
<feature type="region of interest" description="Disordered" evidence="6">
    <location>
        <begin position="220"/>
        <end position="334"/>
    </location>
</feature>
<feature type="region of interest" description="Interaction with PEBP1/RKIP">
    <location>
        <begin position="331"/>
        <end position="349"/>
    </location>
</feature>
<feature type="compositionally biased region" description="Polar residues" evidence="6">
    <location>
        <begin position="239"/>
        <end position="271"/>
    </location>
</feature>
<feature type="compositionally biased region" description="Basic and acidic residues" evidence="6">
    <location>
        <begin position="275"/>
        <end position="285"/>
    </location>
</feature>
<feature type="compositionally biased region" description="Low complexity" evidence="6">
    <location>
        <begin position="286"/>
        <end position="301"/>
    </location>
</feature>
<feature type="active site" description="Proton acceptor">
    <location>
        <position position="468"/>
    </location>
</feature>
<feature type="binding site">
    <location>
        <position position="139"/>
    </location>
    <ligand>
        <name>Zn(2+)</name>
        <dbReference type="ChEBI" id="CHEBI:29105"/>
        <label>1</label>
    </ligand>
</feature>
<feature type="binding site">
    <location>
        <position position="152"/>
    </location>
    <ligand>
        <name>Zn(2+)</name>
        <dbReference type="ChEBI" id="CHEBI:29105"/>
        <label>2</label>
    </ligand>
</feature>
<feature type="binding site">
    <location>
        <position position="155"/>
    </location>
    <ligand>
        <name>Zn(2+)</name>
        <dbReference type="ChEBI" id="CHEBI:29105"/>
        <label>2</label>
    </ligand>
</feature>
<feature type="binding site">
    <location>
        <position position="165"/>
    </location>
    <ligand>
        <name>Zn(2+)</name>
        <dbReference type="ChEBI" id="CHEBI:29105"/>
        <label>1</label>
    </ligand>
</feature>
<feature type="binding site">
    <location>
        <position position="168"/>
    </location>
    <ligand>
        <name>Zn(2+)</name>
        <dbReference type="ChEBI" id="CHEBI:29105"/>
        <label>1</label>
    </ligand>
</feature>
<feature type="binding site">
    <location>
        <position position="173"/>
    </location>
    <ligand>
        <name>Zn(2+)</name>
        <dbReference type="ChEBI" id="CHEBI:29105"/>
        <label>2</label>
    </ligand>
</feature>
<feature type="binding site">
    <location>
        <position position="176"/>
    </location>
    <ligand>
        <name>Zn(2+)</name>
        <dbReference type="ChEBI" id="CHEBI:29105"/>
        <label>2</label>
    </ligand>
</feature>
<feature type="binding site">
    <location>
        <position position="184"/>
    </location>
    <ligand>
        <name>Zn(2+)</name>
        <dbReference type="ChEBI" id="CHEBI:29105"/>
        <label>1</label>
    </ligand>
</feature>
<feature type="binding site" evidence="3">
    <location>
        <begin position="355"/>
        <end position="363"/>
    </location>
    <ligand>
        <name>ATP</name>
        <dbReference type="ChEBI" id="CHEBI:30616"/>
    </ligand>
</feature>
<feature type="binding site" evidence="3">
    <location>
        <position position="375"/>
    </location>
    <ligand>
        <name>ATP</name>
        <dbReference type="ChEBI" id="CHEBI:30616"/>
    </ligand>
</feature>
<feature type="modified residue" description="Phosphoserine; by MAPK1" evidence="2">
    <location>
        <position position="29"/>
    </location>
</feature>
<feature type="modified residue" description="Phosphoserine; by PKA and MAPK1" evidence="48">
    <location>
        <position position="43"/>
    </location>
</feature>
<feature type="modified residue" description="Phosphoserine" evidence="54">
    <location>
        <position position="252"/>
    </location>
</feature>
<feature type="modified residue" description="Phosphoserine; by PKA, PKC and PKB/AKT1" evidence="7 8 13 17 24 25 48">
    <location>
        <position position="259"/>
    </location>
</feature>
<feature type="modified residue" description="Phosphothreonine; by autocatalysis" evidence="48">
    <location>
        <position position="268"/>
    </location>
</feature>
<feature type="modified residue" description="Phosphothreonine; by PKA" evidence="47">
    <location>
        <position position="269"/>
    </location>
</feature>
<feature type="modified residue" description="Phosphoserine; by MAPK1" evidence="36 56">
    <location>
        <position position="289"/>
    </location>
</feature>
<feature type="modified residue" description="Phosphoserine" evidence="57">
    <location>
        <position position="296"/>
    </location>
</feature>
<feature type="modified residue" description="Phosphoserine; by MAPK1" evidence="36 56 57">
    <location>
        <position position="301"/>
    </location>
</feature>
<feature type="modified residue" description="Phosphoserine; by PAK1, PAK2, PAK3 and PAK5" evidence="12 20 25 31 36">
    <location>
        <position position="338"/>
    </location>
</feature>
<feature type="modified residue" description="Phosphoserine; by PAK1, PAK2 and PAK3" evidence="20">
    <location>
        <position position="339"/>
    </location>
</feature>
<feature type="modified residue" description="Phosphotyrosine; by SRC" evidence="25">
    <location>
        <position position="340"/>
    </location>
</feature>
<feature type="modified residue" description="Phosphotyrosine; by SRC" evidence="25">
    <location>
        <position position="341"/>
    </location>
</feature>
<feature type="modified residue" description="Phosphoserine" evidence="22">
    <location>
        <position position="471"/>
    </location>
</feature>
<feature type="modified residue" description="Phosphothreonine" evidence="10">
    <location>
        <position position="491"/>
    </location>
</feature>
<feature type="modified residue" description="Phosphoserine" evidence="10">
    <location>
        <position position="494"/>
    </location>
</feature>
<feature type="modified residue" description="Phosphoserine; by PKC" evidence="48">
    <location>
        <position position="499"/>
    </location>
</feature>
<feature type="modified residue" description="Symmetric dimethylarginine; by PRMT5" evidence="36">
    <location>
        <position position="563"/>
    </location>
</feature>
<feature type="modified residue" description="Phosphoserine" evidence="8 25 36 48">
    <location>
        <position position="621"/>
    </location>
</feature>
<feature type="modified residue" description="Phosphoserine; by MAPK1" evidence="55 57">
    <location>
        <position position="642"/>
    </location>
</feature>
<feature type="splice variant" id="VSP_034649" description="In isoform 2." evidence="52">
    <original>E</original>
    <variation>ENNNLSASPRAWSRRFCLRGR</variation>
    <location>
        <position position="278"/>
    </location>
</feature>
<feature type="sequence variant" id="VAR_071844" description="In CMD1NN; shows a mild increase in kinase activity; dbSNP:rs587777588." evidence="41">
    <original>A</original>
    <variation>T</variation>
    <location>
        <position position="237"/>
    </location>
</feature>
<feature type="sequence variant" id="VAR_037807" description="In NS5; dbSNP:rs397516826." evidence="29">
    <original>R</original>
    <variation>S</variation>
    <location>
        <position position="256"/>
    </location>
</feature>
<feature type="sequence variant" id="VAR_037808" description="In NS5 and LPRD2; shows in vitro greater kinase activity and enhanced ERK activation than wild-type; dbSNP:rs80338796." evidence="28 29">
    <original>S</original>
    <variation>L</variation>
    <location>
        <position position="257"/>
    </location>
</feature>
<feature type="sequence variant" id="VAR_041037" description="In an ovarian serous carcinoma sample; somatic mutation; increased ERK activation; dbSNP:rs3730271." evidence="24 27">
    <original>S</original>
    <variation>A</variation>
    <location>
        <position position="259"/>
    </location>
</feature>
<feature type="sequence variant" id="VAR_037809" description="In NS5; dbSNP:rs397516827." evidence="29">
    <original>S</original>
    <variation>F</variation>
    <location>
        <position position="259"/>
    </location>
</feature>
<feature type="sequence variant" id="VAR_037810" description="In hypertrophic cardiomyopathy; uncertain significance; dbSNP:rs869025501." evidence="29">
    <original>T</original>
    <variation>I</variation>
    <location>
        <position position="260"/>
    </location>
</feature>
<feature type="sequence variant" id="VAR_037811" description="In NS5." evidence="29">
    <original>T</original>
    <variation>R</variation>
    <location>
        <position position="260"/>
    </location>
</feature>
<feature type="sequence variant" id="VAR_037812" description="In NS5; shows in vitro greater kinase activity and enhanced MAPK1 activation than wild-type; dbSNP:rs121434594." evidence="28">
    <original>P</original>
    <variation>A</variation>
    <location>
        <position position="261"/>
    </location>
</feature>
<feature type="sequence variant" id="VAR_037813" description="In NS5; shows greater kinase activity and enhanced MAPK1 activation than wild-type; dbSNP:rs397516828." evidence="29">
    <original>P</original>
    <variation>L</variation>
    <location>
        <position position="261"/>
    </location>
</feature>
<feature type="sequence variant" id="VAR_037814" description="In NS5; shows in vitro greater kinase activity and enhanced MAPK1 activation than wild-type; dbSNP:rs121434594." evidence="28 29 34">
    <original>P</original>
    <variation>S</variation>
    <location>
        <position position="261"/>
    </location>
</feature>
<feature type="sequence variant" id="VAR_037815" description="In NS5; shows in vitro greater kinase activity and enhanced MAPK1 activation than wild-type; dbSNP:rs397516830." evidence="28">
    <original>V</original>
    <variation>A</variation>
    <location>
        <position position="263"/>
    </location>
</feature>
<feature type="sequence variant" id="VAR_018840" description="In dbSNP:rs5746220." evidence="16 51">
    <original>P</original>
    <variation>L</variation>
    <location>
        <position position="308"/>
    </location>
</feature>
<feature type="sequence variant" id="VAR_071845" description="In CMD1NN; shows a mild increase in kinase activity; dbSNP:rs778155315." evidence="41">
    <original>T</original>
    <variation>A</variation>
    <location>
        <position position="310"/>
    </location>
</feature>
<feature type="sequence variant" id="VAR_071846" description="In CMD1NN; shows a mild increase in kinase activity; dbSNP:rs1057403865." evidence="41">
    <original>P</original>
    <variation>A</variation>
    <location>
        <position position="332"/>
    </location>
</feature>
<feature type="sequence variant" id="VAR_041038" description="In a lung adenocarcinoma sample; somatic mutation." evidence="27">
    <original>Q</original>
    <variation>H</variation>
    <location>
        <position position="335"/>
    </location>
</feature>
<feature type="sequence variant" id="VAR_037816" description="In NS5; dbSNP:rs397516815." evidence="29">
    <original>D</original>
    <variation>G</variation>
    <location>
        <position position="486"/>
    </location>
</feature>
<feature type="sequence variant" id="VAR_037817" description="In NS5; has reduced or absent kinase activity; dbSNP:rs80338798." evidence="29">
    <original>D</original>
    <variation>N</variation>
    <location>
        <position position="486"/>
    </location>
</feature>
<feature type="sequence variant" id="VAR_037818" description="In NS5; has reduced or absent kinase activity; dbSNP:rs80338799." evidence="29">
    <original>T</original>
    <variation>I</variation>
    <location>
        <position position="491"/>
    </location>
</feature>
<feature type="sequence variant" id="VAR_037819" description="In NS5; dbSNP:rs80338799." evidence="29">
    <original>T</original>
    <variation>R</variation>
    <location>
        <position position="491"/>
    </location>
</feature>
<feature type="sequence variant" id="VAR_071847" description="In CMD1NN; shows impaired kinase activity and reduced MAPK3 activation with this mutation; dbSNP:rs587777586." evidence="41">
    <original>L</original>
    <variation>P</variation>
    <location>
        <position position="603"/>
    </location>
</feature>
<feature type="sequence variant" id="VAR_037820" description="In NS5; dbSNP:rs1448392469." evidence="29">
    <original>S</original>
    <variation>T</variation>
    <location>
        <position position="612"/>
    </location>
</feature>
<feature type="sequence variant" id="VAR_037821" description="In NS5 and LPRD2; shows in vitro greater kinase activity and enhanced MAPK1 activation than wild-type; dbSNP:rs80338797." evidence="28 29">
    <original>L</original>
    <variation>V</variation>
    <location>
        <position position="613"/>
    </location>
</feature>
<feature type="sequence variant" id="VAR_071848" description="In CMD1NN; shows a mild increase in kinase activity; dbSNP:rs1553609795." evidence="41">
    <original>H</original>
    <variation>R</variation>
    <location>
        <position position="626"/>
    </location>
</feature>
<feature type="sequence variant" id="VAR_071849" description="In CMD1NN; shows a mild increase in kinase activity; dbSNP:rs587777587." evidence="41">
    <original>T</original>
    <variation>M</variation>
    <location>
        <position position="641"/>
    </location>
</feature>
<feature type="mutagenesis site" description="Reduced kinase activity; when associated with 340-D-D-341." evidence="25">
    <original>SS</original>
    <variation>AA</variation>
    <location>
        <begin position="338"/>
        <end position="339"/>
    </location>
</feature>
<feature type="mutagenesis site" description="Non-inhibited by PPP5C. Constitutively active and non-inhibited by PPP5C; when associated with 340-D-D-341." evidence="25">
    <original>SS</original>
    <variation>DE</variation>
    <location>
        <begin position="338"/>
        <end position="339"/>
    </location>
</feature>
<feature type="mutagenesis site" description="Constitutively active and highly phosphorylated on S-338, inhibited by PPP5C. Reduced kinase activity; when associated with 338-A-A-339. Constitutively active and non-inhibited by PPP5C; when associated with 338-D-E-339." evidence="25">
    <original>YY</original>
    <variation>DD</variation>
    <location>
        <begin position="340"/>
        <end position="341"/>
    </location>
</feature>
<feature type="mutagenesis site" description="Catalytically inactive." evidence="35">
    <original>K</original>
    <variation>W</variation>
    <location>
        <position position="375"/>
    </location>
</feature>
<feature type="mutagenesis site" description="Increased kinase activity but can still be inhibited by PPP5C; when associated with D-494." evidence="25">
    <original>T</original>
    <variation>D</variation>
    <location>
        <position position="491"/>
    </location>
</feature>
<feature type="mutagenesis site" description="Increased kinase activity but can still be inhibited by PPP5C; when associated with D-491." evidence="25">
    <original>S</original>
    <variation>D</variation>
    <location>
        <position position="494"/>
    </location>
</feature>
<feature type="mutagenesis site" description="Loss of methylation. Increased stability and catalytic activity in response to EGF treatment." evidence="36">
    <original>R</original>
    <variation>K</variation>
    <location>
        <position position="563"/>
    </location>
</feature>
<feature type="sequence conflict" description="In Ref. 6; AAA60247." evidence="52" ref="6">
    <original>F</original>
    <variation>L</variation>
    <location>
        <position position="240"/>
    </location>
</feature>
<feature type="sequence conflict" description="In Ref. 6; AAA60247." evidence="52" ref="6">
    <original>M</original>
    <variation>I</variation>
    <location>
        <position position="542"/>
    </location>
</feature>
<feature type="strand" evidence="59">
    <location>
        <begin position="57"/>
        <end position="61"/>
    </location>
</feature>
<feature type="turn" evidence="66">
    <location>
        <begin position="63"/>
        <end position="65"/>
    </location>
</feature>
<feature type="strand" evidence="59">
    <location>
        <begin position="67"/>
        <end position="71"/>
    </location>
</feature>
<feature type="helix" evidence="59">
    <location>
        <begin position="78"/>
        <end position="88"/>
    </location>
</feature>
<feature type="helix" evidence="59">
    <location>
        <begin position="93"/>
        <end position="95"/>
    </location>
</feature>
<feature type="strand" evidence="59">
    <location>
        <begin position="96"/>
        <end position="100"/>
    </location>
</feature>
<feature type="strand" evidence="59">
    <location>
        <begin position="103"/>
        <end position="107"/>
    </location>
</feature>
<feature type="strand" evidence="66">
    <location>
        <begin position="110"/>
        <end position="112"/>
    </location>
</feature>
<feature type="helix" evidence="59">
    <location>
        <begin position="118"/>
        <end position="121"/>
    </location>
</feature>
<feature type="strand" evidence="59">
    <location>
        <begin position="125"/>
        <end position="130"/>
    </location>
</feature>
<feature type="strand" evidence="58">
    <location>
        <begin position="132"/>
        <end position="134"/>
    </location>
</feature>
<feature type="strand" evidence="60">
    <location>
        <begin position="135"/>
        <end position="137"/>
    </location>
</feature>
<feature type="strand" evidence="61">
    <location>
        <begin position="141"/>
        <end position="145"/>
    </location>
</feature>
<feature type="turn" evidence="61">
    <location>
        <begin position="153"/>
        <end position="155"/>
    </location>
</feature>
<feature type="strand" evidence="61">
    <location>
        <begin position="160"/>
        <end position="165"/>
    </location>
</feature>
<feature type="turn" evidence="61">
    <location>
        <begin position="166"/>
        <end position="168"/>
    </location>
</feature>
<feature type="strand" evidence="62">
    <location>
        <begin position="170"/>
        <end position="172"/>
    </location>
</feature>
<feature type="helix" evidence="61">
    <location>
        <begin position="174"/>
        <end position="179"/>
    </location>
</feature>
<feature type="strand" evidence="60">
    <location>
        <begin position="182"/>
        <end position="185"/>
    </location>
</feature>
<feature type="strand" evidence="64">
    <location>
        <begin position="350"/>
        <end position="353"/>
    </location>
</feature>
<feature type="strand" evidence="64">
    <location>
        <begin position="363"/>
        <end position="376"/>
    </location>
</feature>
<feature type="helix" evidence="64">
    <location>
        <begin position="384"/>
        <end position="397"/>
    </location>
</feature>
<feature type="strand" evidence="64">
    <location>
        <begin position="408"/>
        <end position="412"/>
    </location>
</feature>
<feature type="strand" evidence="64">
    <location>
        <begin position="414"/>
        <end position="416"/>
    </location>
</feature>
<feature type="strand" evidence="64">
    <location>
        <begin position="418"/>
        <end position="422"/>
    </location>
</feature>
<feature type="strand" evidence="63">
    <location>
        <begin position="429"/>
        <end position="431"/>
    </location>
</feature>
<feature type="turn" evidence="63">
    <location>
        <begin position="434"/>
        <end position="437"/>
    </location>
</feature>
<feature type="helix" evidence="63">
    <location>
        <begin position="442"/>
        <end position="461"/>
    </location>
</feature>
<feature type="helix" evidence="63">
    <location>
        <begin position="471"/>
        <end position="473"/>
    </location>
</feature>
<feature type="turn" evidence="65">
    <location>
        <begin position="478"/>
        <end position="480"/>
    </location>
</feature>
<feature type="strand" evidence="65">
    <location>
        <begin position="481"/>
        <end position="484"/>
    </location>
</feature>
<feature type="strand" evidence="63">
    <location>
        <begin position="510"/>
        <end position="512"/>
    </location>
</feature>
<feature type="helix" evidence="63">
    <location>
        <begin position="514"/>
        <end position="518"/>
    </location>
</feature>
<feature type="strand" evidence="63">
    <location>
        <begin position="520"/>
        <end position="522"/>
    </location>
</feature>
<feature type="helix" evidence="63">
    <location>
        <begin position="527"/>
        <end position="542"/>
    </location>
</feature>
<feature type="turn" evidence="63">
    <location>
        <begin position="547"/>
        <end position="550"/>
    </location>
</feature>
<feature type="helix" evidence="63">
    <location>
        <begin position="554"/>
        <end position="563"/>
    </location>
</feature>
<feature type="helix" evidence="63">
    <location>
        <begin position="580"/>
        <end position="588"/>
    </location>
</feature>
<feature type="turn" evidence="63">
    <location>
        <begin position="593"/>
        <end position="595"/>
    </location>
</feature>
<feature type="helix" evidence="63">
    <location>
        <begin position="599"/>
        <end position="611"/>
    </location>
</feature>
<feature type="turn" evidence="63">
    <location>
        <begin position="612"/>
        <end position="614"/>
    </location>
</feature>
<sequence>MEHIQGAWKTISNGFGFKDAVFDGSSCISPTIVQQFGYQRRASDDGKLTDPSKTSNTIRVFLPNKQRTVVNVRNGMSLHDCLMKALKVRGLQPECCAVFRLLHEHKGKKARLDWNTDAASLIGEELQVDFLDHVPLTTHNFARKTFLKLAFCDICQKFLLNGFRCQTCGYKFHEHCSTKVPTMCVDWSNIRQLLLFPNSTIGDSGVPALPSLTMRRMRESVSRMPVSSQHRYSTPHAFTFNTSSPSSEGSLSQRQRSTSTPNVHMVSTTLPVDSRMIEDAIRSHSESASPSALSSSPNNLSPTGWSQPKTPVPAQRERAPVSGTQEKNKIRPRGQRDSSYYWEIEASEVMLSTRIGSGSFGTVYKGKWHGDVAVKILKVVDPTPEQFQAFRNEVAVLRKTRHVNILLFMGYMTKDNLAIVTQWCEGSSLYKHLHVQETKFQMFQLIDIARQTAQGMDYLHAKNIIHRDMKSNNIFLHEGLTVKIGDFGLATVKSRWSGSQQVEQPTGSVLWMAPEVIRMQDNNPFSFQSDVYSYGIVLYELMTGELPYSHINNRDQIIFMVGRGYASPDLSKLYKNCPKAMKRLVADCVKKVKEERPLFPQILSSIELLQHSLPKINRSASEPSLHRAAHTEDINACTLTTSPRLPVF</sequence>